<comment type="function">
    <text evidence="1 8 11 15 16 25">Specifically hydrolyzes the second messenger cGMP, which is a key regulator of many important physiological processes. Highly specific: compared to other members of the cyclic nucleotide phosphodiesterase family, has the highest affinity and selectivity for cGMP (PubMed:18757755, PubMed:21483814, PubMed:9624146). Specifically regulates natriuretic-peptide-dependent cGMP signaling in heart, acting as a regulator of cardiac hypertrophy in myocytes and muscle. Does not regulate nitric oxide-dependent cGMP in heart (PubMed:25799991). Additional experiments are required to confirm whether its ability to hydrolyze natriuretic-peptide-dependent cGMP is specific to heart or is a general feature of the protein (Probable). In brain, involved in cognitive function, such as learning and long-term memory (By similarity).</text>
</comment>
<comment type="catalytic activity">
    <reaction evidence="8 11 16">
        <text>3',5'-cyclic GMP + H2O = GMP + H(+)</text>
        <dbReference type="Rhea" id="RHEA:16957"/>
        <dbReference type="ChEBI" id="CHEBI:15377"/>
        <dbReference type="ChEBI" id="CHEBI:15378"/>
        <dbReference type="ChEBI" id="CHEBI:57746"/>
        <dbReference type="ChEBI" id="CHEBI:58115"/>
        <dbReference type="EC" id="3.1.4.35"/>
    </reaction>
</comment>
<comment type="cofactor">
    <cofactor evidence="9 10 11 13 14 26">
        <name>Zn(2+)</name>
        <dbReference type="ChEBI" id="CHEBI:29105"/>
    </cofactor>
    <text evidence="9 10 11 13 14 26">Binds 1 Zn(2+) ion per subunit. Binds 2 divalent metal cations per subunit: site 1 preferentially binds zinc, while site 2 has a preference for magnesium. Tightly binds zinc.</text>
</comment>
<comment type="cofactor">
    <cofactor evidence="9 10 11 13 14 26">
        <name>Mg(2+)</name>
        <dbReference type="ChEBI" id="CHEBI:18420"/>
    </cofactor>
    <text evidence="9 10 11 13 14 26">Binds 1 Mg(2+) ions per subunit. Binds 2 divalent metal cations per subunit: site 1 preferentially binds zinc, while site 2 has a preference for magnesium. Binds magnesium less tightly than zinc.</text>
</comment>
<comment type="activity regulation">
    <text evidence="6 9 10 11 13 14 15 16 22">Inhibited by zaprinast; inhibitor is however not specific to PDE9A (PubMed:9624146). Specifically inhibited by BAY-73-6691 (1-(2-chlorophenyl)-6-((2R)-3,3,3- trifluoro-2-methylpropyl)-1,5-dihydro-4H-pyrazolo(3,4-d)pyrimidine-4-one) (PubMed:16150925). BAY-73-9961 has two enantiomers, (R) and (S), due to the presence of a chiral center, and both forms vary in their pattern of interaction (PubMed:20121115, PubMed:21483814). Specifically inhibited by PF-4181366 (4H-Pyrazolo[3,4-d]pyrimidin-4-one, 1- cyclopentyl-1,5-dihydro-6-[(3S,4S)-4-methyl- 1-(6-quinoxalinylmethyl)-3-pyrrolidinyl]-one) (PubMed:19919087). Specifically inhibited by PF-4449613 ((R)-6-(1-(3-phenoxyazetidin-1-yl)ethyl)-1-(tetrahydro-2H-pyran-4-yl)-1H-pyrazolo[3,4-d]pyrimidin- 4(5H)-one) (PubMed:25799991). Specifically inhibited by inhibitor 28 (2-((1-(2-Chlorophenyl)-4-hydroxy-1Hpyrazolo[ 3,4-d]pyrimidin-6-yl)amino)-N-(4- methoxyphenyl)propanamide): inhibitor forms a hydrogen bond with Tyr-484 and Gln-513 (PubMed:22985069). Specifically inhibited by 1-Cyclopentyl-6-[(1r)-1-(3-phenoxyazetidin- 1-Yl)ethyl]-1,5-dihydro-4h-pyrazolo[3,4-D] pyrimidin-4-one: inhibitor forms a hydrogen bond with Tyr-484 and Gln-513 (PubMed:23025719).</text>
</comment>
<comment type="biophysicochemical properties">
    <kinetics>
        <KM evidence="11">0.113 uM for cGMP</KM>
        <KM evidence="11">501 uM for cAMP</KM>
        <Vmax evidence="11">0.285 umol/min/mg enzyme with cGMP as substrate</Vmax>
        <Vmax evidence="11">3.7 umol/min/mg enzyme with cAMP as substrate</Vmax>
        <text evidence="11">kcat is 0.18 sec(-1) for cGMP. kcat is 2.37 sec(-1) for cAMP.</text>
    </kinetics>
</comment>
<comment type="pathway">
    <text>Purine metabolism; 3',5'-cyclic GMP degradation; GMP from 3',5'-cyclic GMP: step 1/1.</text>
</comment>
<comment type="subunit">
    <text evidence="5 11">Homodimer.</text>
</comment>
<comment type="interaction">
    <interactant intactId="EBI-742764">
        <id>O76083</id>
    </interactant>
    <interactant intactId="EBI-747185">
        <id>O95817</id>
        <label>BAG3</label>
    </interactant>
    <organismsDiffer>false</organismsDiffer>
    <experiments>3</experiments>
</comment>
<comment type="interaction">
    <interactant intactId="EBI-742764">
        <id>O76083</id>
    </interactant>
    <interactant intactId="EBI-473775">
        <id>P49759</id>
        <label>CLK1</label>
    </interactant>
    <organismsDiffer>false</organismsDiffer>
    <experiments>3</experiments>
</comment>
<comment type="interaction">
    <interactant intactId="EBI-742764">
        <id>O76083</id>
    </interactant>
    <interactant intactId="EBI-2212355">
        <id>Q49AN0</id>
        <label>CRY2</label>
    </interactant>
    <organismsDiffer>false</organismsDiffer>
    <experiments>3</experiments>
</comment>
<comment type="interaction">
    <interactant intactId="EBI-742764">
        <id>O76083</id>
    </interactant>
    <interactant intactId="EBI-739467">
        <id>Q9H8Y8</id>
        <label>GORASP2</label>
    </interactant>
    <organismsDiffer>false</organismsDiffer>
    <experiments>4</experiments>
</comment>
<comment type="interaction">
    <interactant intactId="EBI-742764">
        <id>O76083</id>
    </interactant>
    <interactant intactId="EBI-10171774">
        <id>P60410</id>
        <label>KRTAP10-8</label>
    </interactant>
    <organismsDiffer>false</organismsDiffer>
    <experiments>3</experiments>
</comment>
<comment type="interaction">
    <interactant intactId="EBI-742764">
        <id>O76083</id>
    </interactant>
    <interactant intactId="EBI-10172511">
        <id>Q9BYR5</id>
        <label>KRTAP4-2</label>
    </interactant>
    <organismsDiffer>false</organismsDiffer>
    <experiments>3</experiments>
</comment>
<comment type="interaction">
    <interactant intactId="EBI-742764">
        <id>O76083</id>
    </interactant>
    <interactant intactId="EBI-1044640">
        <id>Q9BYQ4</id>
        <label>KRTAP9-2</label>
    </interactant>
    <organismsDiffer>false</organismsDiffer>
    <experiments>3</experiments>
</comment>
<comment type="interaction">
    <interactant intactId="EBI-742764">
        <id>O76083</id>
    </interactant>
    <interactant intactId="EBI-1052105">
        <id>Q14657</id>
        <label>LAGE3</label>
    </interactant>
    <organismsDiffer>false</organismsDiffer>
    <experiments>3</experiments>
</comment>
<comment type="interaction">
    <interactant intactId="EBI-742764">
        <id>O76083</id>
    </interactant>
    <interactant intactId="EBI-10173129">
        <id>Q8NAJ2</id>
        <label>LINC02913</label>
    </interactant>
    <organismsDiffer>false</organismsDiffer>
    <experiments>3</experiments>
</comment>
<comment type="interaction">
    <interactant intactId="EBI-742764">
        <id>O76083</id>
    </interactant>
    <interactant intactId="EBI-739696">
        <id>P25791</id>
        <label>LMO2</label>
    </interactant>
    <organismsDiffer>false</organismsDiffer>
    <experiments>3</experiments>
</comment>
<comment type="interaction">
    <interactant intactId="EBI-742764">
        <id>O76083</id>
    </interactant>
    <interactant intactId="EBI-9106509">
        <id>Q9BRA0</id>
        <label>NAA38</label>
    </interactant>
    <organismsDiffer>false</organismsDiffer>
    <experiments>3</experiments>
</comment>
<comment type="interaction">
    <interactant intactId="EBI-742764">
        <id>O76083</id>
    </interactant>
    <interactant intactId="EBI-945833">
        <id>Q7Z3S9</id>
        <label>NOTCH2NLA</label>
    </interactant>
    <organismsDiffer>false</organismsDiffer>
    <experiments>4</experiments>
</comment>
<comment type="interaction">
    <interactant intactId="EBI-742764">
        <id>O76083</id>
    </interactant>
    <interactant intactId="EBI-11524542">
        <id>O76083-2</id>
        <label>PDE9A</label>
    </interactant>
    <organismsDiffer>false</organismsDiffer>
    <experiments>3</experiments>
</comment>
<comment type="interaction">
    <interactant intactId="EBI-742764">
        <id>O76083</id>
    </interactant>
    <interactant intactId="EBI-10285660">
        <id>Q96FC7-2</id>
        <label>PHYHIPL</label>
    </interactant>
    <organismsDiffer>false</organismsDiffer>
    <experiments>3</experiments>
</comment>
<comment type="interaction">
    <interactant intactId="EBI-742764">
        <id>O76083</id>
    </interactant>
    <interactant intactId="EBI-712512">
        <id>P49888</id>
        <label>SULT1E1</label>
    </interactant>
    <organismsDiffer>false</organismsDiffer>
    <experiments>3</experiments>
</comment>
<comment type="interaction">
    <interactant intactId="EBI-742764">
        <id>O76083</id>
    </interactant>
    <interactant intactId="EBI-742790">
        <id>Q13049</id>
        <label>TRIM32</label>
    </interactant>
    <organismsDiffer>false</organismsDiffer>
    <experiments>10</experiments>
</comment>
<comment type="interaction">
    <interactant intactId="EBI-742764">
        <id>O76083</id>
    </interactant>
    <interactant intactId="EBI-5457544">
        <id>Q9BRU9</id>
        <label>UTP23</label>
    </interactant>
    <organismsDiffer>false</organismsDiffer>
    <experiments>3</experiments>
</comment>
<comment type="interaction">
    <interactant intactId="EBI-742764">
        <id>O76083</id>
    </interactant>
    <interactant intactId="EBI-750052">
        <id>Q9Y260</id>
        <label>ZFAB</label>
    </interactant>
    <organismsDiffer>false</organismsDiffer>
    <experiments>3</experiments>
</comment>
<comment type="interaction">
    <interactant intactId="EBI-11524542">
        <id>O76083-2</id>
    </interactant>
    <interactant intactId="EBI-747185">
        <id>O95817</id>
        <label>BAG3</label>
    </interactant>
    <organismsDiffer>false</organismsDiffer>
    <experiments>3</experiments>
</comment>
<comment type="interaction">
    <interactant intactId="EBI-11524542">
        <id>O76083-2</id>
    </interactant>
    <interactant intactId="EBI-295634">
        <id>Q16543</id>
        <label>CDC37</label>
    </interactant>
    <organismsDiffer>false</organismsDiffer>
    <experiments>3</experiments>
</comment>
<comment type="interaction">
    <interactant intactId="EBI-11524542">
        <id>O76083-2</id>
    </interactant>
    <interactant intactId="EBI-11981867">
        <id>P49759-3</id>
        <label>CLK1</label>
    </interactant>
    <organismsDiffer>false</organismsDiffer>
    <experiments>3</experiments>
</comment>
<comment type="interaction">
    <interactant intactId="EBI-11524542">
        <id>O76083-2</id>
    </interactant>
    <interactant intactId="EBI-2212355">
        <id>Q49AN0</id>
        <label>CRY2</label>
    </interactant>
    <organismsDiffer>false</organismsDiffer>
    <experiments>3</experiments>
</comment>
<comment type="interaction">
    <interactant intactId="EBI-11524542">
        <id>O76083-2</id>
    </interactant>
    <interactant intactId="EBI-3867333">
        <id>A8MQ03</id>
        <label>CYSRT1</label>
    </interactant>
    <organismsDiffer>false</organismsDiffer>
    <experiments>3</experiments>
</comment>
<comment type="interaction">
    <interactant intactId="EBI-11524542">
        <id>O76083-2</id>
    </interactant>
    <interactant intactId="EBI-11944935">
        <id>Q15051-2</id>
        <label>IQCB1</label>
    </interactant>
    <organismsDiffer>false</organismsDiffer>
    <experiments>5</experiments>
</comment>
<comment type="interaction">
    <interactant intactId="EBI-11524542">
        <id>O76083-2</id>
    </interactant>
    <interactant intactId="EBI-2556193">
        <id>Q63ZY3</id>
        <label>KANK2</label>
    </interactant>
    <organismsDiffer>false</organismsDiffer>
    <experiments>3</experiments>
</comment>
<comment type="interaction">
    <interactant intactId="EBI-11524542">
        <id>O76083-2</id>
    </interactant>
    <interactant intactId="EBI-1047093">
        <id>O76011</id>
        <label>KRT34</label>
    </interactant>
    <organismsDiffer>false</organismsDiffer>
    <experiments>5</experiments>
</comment>
<comment type="interaction">
    <interactant intactId="EBI-11524542">
        <id>O76083-2</id>
    </interactant>
    <interactant intactId="EBI-11959885">
        <id>Q07627</id>
        <label>KRTAP1-1</label>
    </interactant>
    <organismsDiffer>false</organismsDiffer>
    <experiments>3</experiments>
</comment>
<comment type="interaction">
    <interactant intactId="EBI-11524542">
        <id>O76083-2</id>
    </interactant>
    <interactant intactId="EBI-11749135">
        <id>Q8IUG1</id>
        <label>KRTAP1-3</label>
    </interactant>
    <organismsDiffer>false</organismsDiffer>
    <experiments>3</experiments>
</comment>
<comment type="interaction">
    <interactant intactId="EBI-11524542">
        <id>O76083-2</id>
    </interactant>
    <interactant intactId="EBI-10172290">
        <id>P60409</id>
        <label>KRTAP10-7</label>
    </interactant>
    <organismsDiffer>false</organismsDiffer>
    <experiments>3</experiments>
</comment>
<comment type="interaction">
    <interactant intactId="EBI-11524542">
        <id>O76083-2</id>
    </interactant>
    <interactant intactId="EBI-10171774">
        <id>P60410</id>
        <label>KRTAP10-8</label>
    </interactant>
    <organismsDiffer>false</organismsDiffer>
    <experiments>3</experiments>
</comment>
<comment type="interaction">
    <interactant intactId="EBI-11524542">
        <id>O76083-2</id>
    </interactant>
    <interactant intactId="EBI-10172052">
        <id>P60411</id>
        <label>KRTAP10-9</label>
    </interactant>
    <organismsDiffer>false</organismsDiffer>
    <experiments>3</experiments>
</comment>
<comment type="interaction">
    <interactant intactId="EBI-11524542">
        <id>O76083-2</id>
    </interactant>
    <interactant intactId="EBI-10176379">
        <id>P59991</id>
        <label>KRTAP12-2</label>
    </interactant>
    <organismsDiffer>false</organismsDiffer>
    <experiments>3</experiments>
</comment>
<comment type="interaction">
    <interactant intactId="EBI-11524542">
        <id>O76083-2</id>
    </interactant>
    <interactant intactId="EBI-11953334">
        <id>P60328</id>
        <label>KRTAP12-3</label>
    </interactant>
    <organismsDiffer>false</organismsDiffer>
    <experiments>3</experiments>
</comment>
<comment type="interaction">
    <interactant intactId="EBI-11524542">
        <id>O76083-2</id>
    </interactant>
    <interactant intactId="EBI-3958099">
        <id>P26371</id>
        <label>KRTAP5-9</label>
    </interactant>
    <organismsDiffer>false</organismsDiffer>
    <experiments>3</experiments>
</comment>
<comment type="interaction">
    <interactant intactId="EBI-11524542">
        <id>O76083-2</id>
    </interactant>
    <interactant intactId="EBI-1052105">
        <id>Q14657</id>
        <label>LAGE3</label>
    </interactant>
    <organismsDiffer>false</organismsDiffer>
    <experiments>3</experiments>
</comment>
<comment type="interaction">
    <interactant intactId="EBI-11524542">
        <id>O76083-2</id>
    </interactant>
    <interactant intactId="EBI-3951858">
        <id>Q16649</id>
        <label>NFIL3</label>
    </interactant>
    <organismsDiffer>false</organismsDiffer>
    <experiments>3</experiments>
</comment>
<comment type="interaction">
    <interactant intactId="EBI-11524542">
        <id>O76083-2</id>
    </interactant>
    <interactant intactId="EBI-11524542">
        <id>O76083-2</id>
        <label>PDE9A</label>
    </interactant>
    <organismsDiffer>false</organismsDiffer>
    <experiments>3</experiments>
</comment>
<comment type="interaction">
    <interactant intactId="EBI-11524542">
        <id>O76083-2</id>
    </interactant>
    <interactant intactId="EBI-748888">
        <id>Q96FC7</id>
        <label>PHYHIPL</label>
    </interactant>
    <organismsDiffer>false</organismsDiffer>
    <experiments>3</experiments>
</comment>
<comment type="interaction">
    <interactant intactId="EBI-11524542">
        <id>O76083-2</id>
    </interactant>
    <interactant intactId="EBI-2798416">
        <id>Q99633</id>
        <label>PRPF18</label>
    </interactant>
    <organismsDiffer>false</organismsDiffer>
    <experiments>3</experiments>
</comment>
<comment type="interaction">
    <interactant intactId="EBI-11524542">
        <id>O76083-2</id>
    </interactant>
    <interactant intactId="EBI-727004">
        <id>O00560</id>
        <label>SDCBP</label>
    </interactant>
    <organismsDiffer>false</organismsDiffer>
    <experiments>3</experiments>
</comment>
<comment type="interaction">
    <interactant intactId="EBI-11524542">
        <id>O76083-2</id>
    </interactant>
    <interactant intactId="EBI-712512">
        <id>P49888</id>
        <label>SULT1E1</label>
    </interactant>
    <organismsDiffer>false</organismsDiffer>
    <experiments>3</experiments>
</comment>
<comment type="interaction">
    <interactant intactId="EBI-11524542">
        <id>O76083-2</id>
    </interactant>
    <interactant intactId="EBI-742790">
        <id>Q13049</id>
        <label>TRIM32</label>
    </interactant>
    <organismsDiffer>false</organismsDiffer>
    <experiments>10</experiments>
</comment>
<comment type="interaction">
    <interactant intactId="EBI-11524542">
        <id>O76083-2</id>
    </interactant>
    <interactant intactId="EBI-6657186">
        <id>O15205</id>
        <label>UBD</label>
    </interactant>
    <organismsDiffer>false</organismsDiffer>
    <experiments>3</experiments>
</comment>
<comment type="interaction">
    <interactant intactId="EBI-11524542">
        <id>O76083-2</id>
    </interactant>
    <interactant intactId="EBI-540834">
        <id>P61964</id>
        <label>WDR5</label>
    </interactant>
    <organismsDiffer>false</organismsDiffer>
    <experiments>3</experiments>
</comment>
<comment type="interaction">
    <interactant intactId="EBI-16433425">
        <id>O76083-4</id>
    </interactant>
    <interactant intactId="EBI-11524542">
        <id>O76083-2</id>
        <label>PDE9A</label>
    </interactant>
    <organismsDiffer>false</organismsDiffer>
    <experiments>3</experiments>
</comment>
<comment type="interaction">
    <interactant intactId="EBI-16433425">
        <id>O76083-4</id>
    </interactant>
    <interactant intactId="EBI-742790">
        <id>Q13049</id>
        <label>TRIM32</label>
    </interactant>
    <organismsDiffer>false</organismsDiffer>
    <experiments>3</experiments>
</comment>
<comment type="subcellular location">
    <molecule>Isoform PDE9A1</molecule>
    <subcellularLocation>
        <location evidence="7">Cell projection</location>
        <location evidence="7">Ruffle membrane</location>
    </subcellularLocation>
    <subcellularLocation>
        <location evidence="7">Cytoplasm</location>
        <location evidence="7">Perinuclear region</location>
    </subcellularLocation>
    <subcellularLocation>
        <location evidence="7">Golgi apparatus</location>
    </subcellularLocation>
    <subcellularLocation>
        <location evidence="7">Endoplasmic reticulum</location>
    </subcellularLocation>
    <subcellularLocation>
        <location evidence="15">Cell membrane</location>
        <location evidence="15">Sarcolemma</location>
    </subcellularLocation>
</comment>
<comment type="subcellular location">
    <molecule>Isoform PDE9A2</molecule>
    <subcellularLocation>
        <location evidence="7">Cell projection</location>
        <location evidence="7">Ruffle membrane</location>
    </subcellularLocation>
    <subcellularLocation>
        <location evidence="7">Cytoplasm</location>
        <location evidence="7">Perinuclear region</location>
    </subcellularLocation>
</comment>
<comment type="subcellular location">
    <molecule>Isoform PDE9A3</molecule>
    <subcellularLocation>
        <location evidence="7">Cytoplasm</location>
    </subcellularLocation>
    <subcellularLocation>
        <location evidence="7">Endoplasmic reticulum</location>
    </subcellularLocation>
</comment>
<comment type="subcellular location">
    <molecule>Isoform PDE9A17</molecule>
    <subcellularLocation>
        <location evidence="7">Cytoplasm</location>
    </subcellularLocation>
    <subcellularLocation>
        <location evidence="7">Endoplasmic reticulum</location>
    </subcellularLocation>
</comment>
<comment type="alternative products">
    <event type="alternative splicing"/>
    <isoform>
        <id>O76083-1</id>
        <name>PDE9A1</name>
        <sequence type="displayed"/>
    </isoform>
    <isoform>
        <id>O76083-2</id>
        <name>PDE9A2</name>
        <sequence type="described" ref="VSP_004599"/>
    </isoform>
    <isoform>
        <id>O76083-3</id>
        <name>PDE9A3</name>
        <sequence type="described" ref="VSP_004598 VSP_004599"/>
    </isoform>
    <isoform>
        <id>O76083-4</id>
        <name>PDE9A4</name>
        <sequence type="described" ref="VSP_004600"/>
    </isoform>
    <isoform>
        <id>O76083-5</id>
        <name>PDE9A5</name>
        <sequence type="described" ref="VSP_017309"/>
    </isoform>
    <isoform>
        <id>O76083-6</id>
        <name>PDE9A6</name>
        <name>PDE9A5</name>
        <sequence type="described" ref="VSP_017305 VSP_004599"/>
    </isoform>
    <isoform>
        <id>O76083-7</id>
        <name>PDE9A7</name>
        <name>PDE9A8</name>
        <name>PDE9A14</name>
        <name>PDE9A19</name>
        <name>PDE9A20</name>
        <sequence type="described" ref="VSP_017303"/>
    </isoform>
    <isoform>
        <id>O76083-8</id>
        <name>PDE9A9</name>
        <sequence type="described" ref="VSP_017307 VSP_004599"/>
    </isoform>
    <isoform>
        <id>O76083-9</id>
        <name>PDE9A10</name>
        <sequence type="described" ref="VSP_017304 VSP_017310"/>
    </isoform>
    <isoform>
        <id>O76083-10</id>
        <name>PDE9A11</name>
        <name>PDE9A15</name>
        <sequence type="described" ref="VSP_017302 VSP_017311"/>
    </isoform>
    <isoform>
        <id>O76083-11</id>
        <name>PDE9A12</name>
        <sequence type="described" ref="VSP_017305 VSP_017308"/>
    </isoform>
    <isoform>
        <id>O76083-12</id>
        <name>PDE9A13</name>
        <sequence type="described" ref="VSP_017306"/>
    </isoform>
    <isoform>
        <id>O76083-13</id>
        <name>PDE9A16</name>
        <sequence type="described" ref="VSP_004598"/>
    </isoform>
    <isoform>
        <id>O76083-14</id>
        <name>PDE9A17</name>
        <sequence type="described" ref="VSP_017305"/>
    </isoform>
    <isoform>
        <id>O76083-15</id>
        <name>PDE9A18</name>
        <sequence type="described" ref="VSP_017307"/>
    </isoform>
    <isoform>
        <id>O76083-16</id>
        <name>PDE9A21</name>
        <sequence type="described" ref="VSP_038647 VSP_004599"/>
    </isoform>
</comment>
<comment type="tissue specificity">
    <text evidence="4 12 15 16">Expressed in all tissues examined (testis, brain, small intestine, skeletal muscle, heart, lung, thymus, spleen, placenta, kidney, liver, pancreas, ovary and prostate) except blood (PubMed:9624146). Highest levels in brain, heart, kidney, spleen, prostate and colon. Isoform PDE9A12 is found in prostate (PubMed:12565835). In brain, present in the cortex, cerebellum, and subiculum (at protein level) (PubMed:22328573). In heart, primarily localizes to myocytes (PubMed:25799991).</text>
</comment>
<comment type="induction">
    <text evidence="15">Up-regulated in left ventricular hypertrophy from aortic stenosis and following heart failure with preserved ejection fraction (at protein level).</text>
</comment>
<comment type="miscellaneous">
    <text evidence="22 28">PDE9A is a potential target for treatment of diseases such as stress-induced heart disease or long-term memory defects. Specific inhibitors, such as BAY-73-6691 or PF-4449613 are promising candidates for clinical tests.</text>
</comment>
<comment type="miscellaneous">
    <text evidence="27">N-(4-methoxyphenyl)-N~2~-[1-(2-methylphenyl)-4-oxo-4,5-dihydro-1H-pyrazolo[3,4-d]pyrimidin-6-yl]-L-alaninamide correspond to compound 28.</text>
</comment>
<comment type="similarity">
    <text evidence="25">Belongs to the cyclic nucleotide phosphodiesterase family. PDE9 subfamily.</text>
</comment>
<dbReference type="EC" id="3.1.4.35" evidence="8 11 16"/>
<dbReference type="EMBL" id="AF048837">
    <property type="protein sequence ID" value="AAC39778.1"/>
    <property type="molecule type" value="mRNA"/>
</dbReference>
<dbReference type="EMBL" id="AB017602">
    <property type="protein sequence ID" value="BAA88847.1"/>
    <property type="molecule type" value="Genomic_DNA"/>
</dbReference>
<dbReference type="EMBL" id="AF067223">
    <property type="protein sequence ID" value="AAC26723.1"/>
    <property type="molecule type" value="mRNA"/>
</dbReference>
<dbReference type="EMBL" id="AF067224">
    <property type="protein sequence ID" value="AAC26724.1"/>
    <property type="molecule type" value="mRNA"/>
</dbReference>
<dbReference type="EMBL" id="AF067225">
    <property type="protein sequence ID" value="AAC26725.1"/>
    <property type="molecule type" value="mRNA"/>
</dbReference>
<dbReference type="EMBL" id="AF067226">
    <property type="protein sequence ID" value="AAC26726.1"/>
    <property type="molecule type" value="mRNA"/>
</dbReference>
<dbReference type="EMBL" id="AY196299">
    <property type="protein sequence ID" value="AAO34685.1"/>
    <property type="molecule type" value="mRNA"/>
</dbReference>
<dbReference type="EMBL" id="AY196300">
    <property type="protein sequence ID" value="AAO34686.1"/>
    <property type="molecule type" value="mRNA"/>
</dbReference>
<dbReference type="EMBL" id="AY196301">
    <property type="protein sequence ID" value="AAO34687.1"/>
    <property type="molecule type" value="mRNA"/>
</dbReference>
<dbReference type="EMBL" id="AY196302">
    <property type="protein sequence ID" value="AAO34688.1"/>
    <property type="molecule type" value="mRNA"/>
</dbReference>
<dbReference type="EMBL" id="AY196303">
    <property type="protein sequence ID" value="AAO34689.1"/>
    <property type="molecule type" value="mRNA"/>
</dbReference>
<dbReference type="EMBL" id="AY196304">
    <property type="protein sequence ID" value="AAO34690.1"/>
    <property type="molecule type" value="mRNA"/>
</dbReference>
<dbReference type="EMBL" id="AY196305">
    <property type="protein sequence ID" value="AAO34691.1"/>
    <property type="molecule type" value="mRNA"/>
</dbReference>
<dbReference type="EMBL" id="AY196306">
    <property type="protein sequence ID" value="AAO34692.1"/>
    <property type="molecule type" value="mRNA"/>
</dbReference>
<dbReference type="EMBL" id="AY196307">
    <property type="protein sequence ID" value="AAO34693.1"/>
    <property type="molecule type" value="mRNA"/>
</dbReference>
<dbReference type="EMBL" id="AY196308">
    <property type="protein sequence ID" value="AAO34694.1"/>
    <property type="molecule type" value="mRNA"/>
</dbReference>
<dbReference type="EMBL" id="AY196309">
    <property type="protein sequence ID" value="AAO34695.1"/>
    <property type="molecule type" value="mRNA"/>
</dbReference>
<dbReference type="EMBL" id="AY196310">
    <property type="protein sequence ID" value="AAO34696.1"/>
    <property type="molecule type" value="mRNA"/>
</dbReference>
<dbReference type="EMBL" id="AY196311">
    <property type="protein sequence ID" value="AAO34697.1"/>
    <property type="molecule type" value="mRNA"/>
</dbReference>
<dbReference type="EMBL" id="AY196312">
    <property type="protein sequence ID" value="AAO34698.1"/>
    <property type="molecule type" value="mRNA"/>
</dbReference>
<dbReference type="EMBL" id="AY196313">
    <property type="protein sequence ID" value="AAO34699.1"/>
    <property type="molecule type" value="mRNA"/>
</dbReference>
<dbReference type="EMBL" id="AY196314">
    <property type="protein sequence ID" value="AAO34700.1"/>
    <property type="molecule type" value="mRNA"/>
</dbReference>
<dbReference type="EMBL" id="AY242121">
    <property type="protein sequence ID" value="AAO88210.1"/>
    <property type="molecule type" value="mRNA"/>
</dbReference>
<dbReference type="EMBL" id="AY701187">
    <property type="protein sequence ID" value="AAV84271.1"/>
    <property type="molecule type" value="mRNA"/>
</dbReference>
<dbReference type="EMBL" id="AK294112">
    <property type="protein sequence ID" value="BAG57446.1"/>
    <property type="molecule type" value="mRNA"/>
</dbReference>
<dbReference type="EMBL" id="AK314679">
    <property type="protein sequence ID" value="BAG37232.1"/>
    <property type="molecule type" value="mRNA"/>
</dbReference>
<dbReference type="EMBL" id="BT007016">
    <property type="protein sequence ID" value="AAP35662.1"/>
    <property type="molecule type" value="mRNA"/>
</dbReference>
<dbReference type="EMBL" id="AP001747">
    <property type="protein sequence ID" value="BAA95552.1"/>
    <property type="molecule type" value="Genomic_DNA"/>
</dbReference>
<dbReference type="EMBL" id="CH471079">
    <property type="protein sequence ID" value="EAX09544.1"/>
    <property type="molecule type" value="Genomic_DNA"/>
</dbReference>
<dbReference type="EMBL" id="CH471079">
    <property type="protein sequence ID" value="EAX09536.1"/>
    <property type="molecule type" value="Genomic_DNA"/>
</dbReference>
<dbReference type="EMBL" id="CH471079">
    <property type="protein sequence ID" value="EAX09537.1"/>
    <property type="molecule type" value="Genomic_DNA"/>
</dbReference>
<dbReference type="EMBL" id="CH471079">
    <property type="protein sequence ID" value="EAX09541.1"/>
    <property type="molecule type" value="Genomic_DNA"/>
</dbReference>
<dbReference type="EMBL" id="CH471079">
    <property type="protein sequence ID" value="EAX09542.1"/>
    <property type="molecule type" value="Genomic_DNA"/>
</dbReference>
<dbReference type="EMBL" id="CH471079">
    <property type="protein sequence ID" value="EAX09546.1"/>
    <property type="molecule type" value="Genomic_DNA"/>
</dbReference>
<dbReference type="EMBL" id="CH471079">
    <property type="protein sequence ID" value="EAX09540.1"/>
    <property type="molecule type" value="Genomic_DNA"/>
</dbReference>
<dbReference type="EMBL" id="CH471079">
    <property type="protein sequence ID" value="EAX09548.1"/>
    <property type="molecule type" value="Genomic_DNA"/>
</dbReference>
<dbReference type="EMBL" id="CH471079">
    <property type="protein sequence ID" value="EAX09549.1"/>
    <property type="molecule type" value="Genomic_DNA"/>
</dbReference>
<dbReference type="EMBL" id="BC009047">
    <property type="protein sequence ID" value="AAH09047.1"/>
    <property type="molecule type" value="mRNA"/>
</dbReference>
<dbReference type="CCDS" id="CCDS13690.1">
    <molecule id="O76083-1"/>
</dbReference>
<dbReference type="CCDS" id="CCDS33567.1">
    <molecule id="O76083-5"/>
</dbReference>
<dbReference type="CCDS" id="CCDS33568.1">
    <molecule id="O76083-2"/>
</dbReference>
<dbReference type="CCDS" id="CCDS33569.1">
    <molecule id="O76083-15"/>
</dbReference>
<dbReference type="CCDS" id="CCDS33570.1">
    <molecule id="O76083-12"/>
</dbReference>
<dbReference type="CCDS" id="CCDS33571.1">
    <molecule id="O76083-4"/>
</dbReference>
<dbReference type="CCDS" id="CCDS42941.1">
    <molecule id="O76083-8"/>
</dbReference>
<dbReference type="CCDS" id="CCDS42942.1">
    <molecule id="O76083-14"/>
</dbReference>
<dbReference type="CCDS" id="CCDS42943.1">
    <molecule id="O76083-6"/>
</dbReference>
<dbReference type="CCDS" id="CCDS42944.1">
    <molecule id="O76083-11"/>
</dbReference>
<dbReference type="CCDS" id="CCDS42945.1">
    <molecule id="O76083-13"/>
</dbReference>
<dbReference type="CCDS" id="CCDS42946.1">
    <molecule id="O76083-3"/>
</dbReference>
<dbReference type="CCDS" id="CCDS42947.1">
    <molecule id="O76083-9"/>
</dbReference>
<dbReference type="RefSeq" id="NP_001001567.1">
    <molecule id="O76083-2"/>
    <property type="nucleotide sequence ID" value="NM_001001567.2"/>
</dbReference>
<dbReference type="RefSeq" id="NP_001001568.1">
    <molecule id="O76083-3"/>
    <property type="nucleotide sequence ID" value="NM_001001568.2"/>
</dbReference>
<dbReference type="RefSeq" id="NP_001001569.1">
    <molecule id="O76083-4"/>
    <property type="nucleotide sequence ID" value="NM_001001569.2"/>
</dbReference>
<dbReference type="RefSeq" id="NP_001001570.1">
    <molecule id="O76083-5"/>
    <property type="nucleotide sequence ID" value="NM_001001570.2"/>
</dbReference>
<dbReference type="RefSeq" id="NP_001001571.1">
    <molecule id="O76083-6"/>
    <property type="nucleotide sequence ID" value="NM_001001571.2"/>
</dbReference>
<dbReference type="RefSeq" id="NP_001001572.1">
    <molecule id="O76083-7"/>
    <property type="nucleotide sequence ID" value="NM_001001572.2"/>
</dbReference>
<dbReference type="RefSeq" id="NP_001001573.1">
    <molecule id="O76083-7"/>
    <property type="nucleotide sequence ID" value="NM_001001573.2"/>
</dbReference>
<dbReference type="RefSeq" id="NP_001001574.1">
    <molecule id="O76083-8"/>
    <property type="nucleotide sequence ID" value="NM_001001574.2"/>
</dbReference>
<dbReference type="RefSeq" id="NP_001001575.1">
    <molecule id="O76083-9"/>
    <property type="nucleotide sequence ID" value="NM_001001575.2"/>
</dbReference>
<dbReference type="RefSeq" id="NP_001001576.1">
    <molecule id="O76083-10"/>
    <property type="nucleotide sequence ID" value="NM_001001576.2"/>
</dbReference>
<dbReference type="RefSeq" id="NP_001001577.1">
    <molecule id="O76083-11"/>
    <property type="nucleotide sequence ID" value="NM_001001577.2"/>
</dbReference>
<dbReference type="RefSeq" id="NP_001001578.1">
    <molecule id="O76083-12"/>
    <property type="nucleotide sequence ID" value="NM_001001578.2"/>
</dbReference>
<dbReference type="RefSeq" id="NP_001001579.1">
    <molecule id="O76083-7"/>
    <property type="nucleotide sequence ID" value="NM_001001579.2"/>
</dbReference>
<dbReference type="RefSeq" id="NP_001001580.1">
    <molecule id="O76083-10"/>
    <property type="nucleotide sequence ID" value="NM_001001580.2"/>
</dbReference>
<dbReference type="RefSeq" id="NP_001001581.1">
    <molecule id="O76083-13"/>
    <property type="nucleotide sequence ID" value="NM_001001581.2"/>
</dbReference>
<dbReference type="RefSeq" id="NP_001001582.1">
    <molecule id="O76083-14"/>
    <property type="nucleotide sequence ID" value="NM_001001582.2"/>
</dbReference>
<dbReference type="RefSeq" id="NP_001001583.1">
    <molecule id="O76083-15"/>
    <property type="nucleotide sequence ID" value="NM_001001583.2"/>
</dbReference>
<dbReference type="RefSeq" id="NP_001001584.1">
    <molecule id="O76083-7"/>
    <property type="nucleotide sequence ID" value="NM_001001584.3"/>
</dbReference>
<dbReference type="RefSeq" id="NP_001001585.1">
    <molecule id="O76083-7"/>
    <property type="nucleotide sequence ID" value="NM_001001585.2"/>
</dbReference>
<dbReference type="RefSeq" id="NP_001302462.1">
    <molecule id="O76083-16"/>
    <property type="nucleotide sequence ID" value="NM_001315533.2"/>
</dbReference>
<dbReference type="RefSeq" id="NP_002597.1">
    <molecule id="O76083-1"/>
    <property type="nucleotide sequence ID" value="NM_002606.3"/>
</dbReference>
<dbReference type="RefSeq" id="XP_016883855.1">
    <molecule id="O76083-7"/>
    <property type="nucleotide sequence ID" value="XM_017028366.2"/>
</dbReference>
<dbReference type="RefSeq" id="XP_054180519.1">
    <molecule id="O76083-7"/>
    <property type="nucleotide sequence ID" value="XM_054324544.1"/>
</dbReference>
<dbReference type="PDB" id="2HD1">
    <property type="method" value="X-ray"/>
    <property type="resolution" value="2.23 A"/>
    <property type="chains" value="A/B=241-566"/>
</dbReference>
<dbReference type="PDB" id="2YY2">
    <property type="method" value="X-ray"/>
    <property type="resolution" value="2.80 A"/>
    <property type="chains" value="A/B=241-566"/>
</dbReference>
<dbReference type="PDB" id="3DY8">
    <property type="method" value="X-ray"/>
    <property type="resolution" value="2.15 A"/>
    <property type="chains" value="A/B=242-566"/>
</dbReference>
<dbReference type="PDB" id="3DYL">
    <property type="method" value="X-ray"/>
    <property type="resolution" value="2.70 A"/>
    <property type="chains" value="A/B=242-566"/>
</dbReference>
<dbReference type="PDB" id="3DYN">
    <property type="method" value="X-ray"/>
    <property type="resolution" value="2.10 A"/>
    <property type="chains" value="A/B=242-566"/>
</dbReference>
<dbReference type="PDB" id="3DYQ">
    <property type="method" value="X-ray"/>
    <property type="resolution" value="2.50 A"/>
    <property type="chains" value="A/B=242-566"/>
</dbReference>
<dbReference type="PDB" id="3DYS">
    <property type="method" value="X-ray"/>
    <property type="resolution" value="2.30 A"/>
    <property type="chains" value="A/B=242-566"/>
</dbReference>
<dbReference type="PDB" id="3JSI">
    <property type="method" value="X-ray"/>
    <property type="resolution" value="2.72 A"/>
    <property type="chains" value="A/B=242-566"/>
</dbReference>
<dbReference type="PDB" id="3JSW">
    <property type="method" value="X-ray"/>
    <property type="resolution" value="2.30 A"/>
    <property type="chains" value="A/B=242-566"/>
</dbReference>
<dbReference type="PDB" id="3K3E">
    <property type="method" value="X-ray"/>
    <property type="resolution" value="2.70 A"/>
    <property type="chains" value="A/B=241-566"/>
</dbReference>
<dbReference type="PDB" id="3K3H">
    <property type="method" value="X-ray"/>
    <property type="resolution" value="2.50 A"/>
    <property type="chains" value="A/B=241-566"/>
</dbReference>
<dbReference type="PDB" id="3N3Z">
    <property type="method" value="X-ray"/>
    <property type="resolution" value="2.75 A"/>
    <property type="chains" value="A/B=241-566"/>
</dbReference>
<dbReference type="PDB" id="3QI3">
    <property type="method" value="X-ray"/>
    <property type="resolution" value="2.30 A"/>
    <property type="chains" value="A/B=1-593"/>
</dbReference>
<dbReference type="PDB" id="3QI4">
    <property type="method" value="X-ray"/>
    <property type="resolution" value="2.50 A"/>
    <property type="chains" value="A/B=1-593"/>
</dbReference>
<dbReference type="PDB" id="4E90">
    <property type="method" value="X-ray"/>
    <property type="resolution" value="2.50 A"/>
    <property type="chains" value="A/B=242-566"/>
</dbReference>
<dbReference type="PDB" id="4G2J">
    <property type="method" value="X-ray"/>
    <property type="resolution" value="2.40 A"/>
    <property type="chains" value="A/B=242-566"/>
</dbReference>
<dbReference type="PDB" id="4G2L">
    <property type="method" value="X-ray"/>
    <property type="resolution" value="3.00 A"/>
    <property type="chains" value="A/B=242-566"/>
</dbReference>
<dbReference type="PDB" id="4GH6">
    <property type="method" value="X-ray"/>
    <property type="resolution" value="2.70 A"/>
    <property type="chains" value="A/B=241-566"/>
</dbReference>
<dbReference type="PDB" id="4Y86">
    <property type="method" value="X-ray"/>
    <property type="resolution" value="2.01 A"/>
    <property type="chains" value="A/B=1-593"/>
</dbReference>
<dbReference type="PDB" id="4Y87">
    <property type="method" value="X-ray"/>
    <property type="resolution" value="3.10 A"/>
    <property type="chains" value="A/B=1-593"/>
</dbReference>
<dbReference type="PDB" id="4Y8C">
    <property type="method" value="X-ray"/>
    <property type="resolution" value="2.70 A"/>
    <property type="chains" value="A/B=1-593"/>
</dbReference>
<dbReference type="PDB" id="6A3N">
    <property type="method" value="X-ray"/>
    <property type="resolution" value="2.60 A"/>
    <property type="chains" value="A/B=245-566"/>
</dbReference>
<dbReference type="PDB" id="6LZZ">
    <property type="method" value="X-ray"/>
    <property type="resolution" value="2.40 A"/>
    <property type="chains" value="A/B=245-566"/>
</dbReference>
<dbReference type="PDB" id="7F0I">
    <property type="method" value="X-ray"/>
    <property type="resolution" value="2.70 A"/>
    <property type="chains" value="A/B=1-593"/>
</dbReference>
<dbReference type="PDB" id="8BPY">
    <property type="method" value="X-ray"/>
    <property type="resolution" value="3.30 A"/>
    <property type="chains" value="A/B=247-561"/>
</dbReference>
<dbReference type="PDBsum" id="2HD1"/>
<dbReference type="PDBsum" id="2YY2"/>
<dbReference type="PDBsum" id="3DY8"/>
<dbReference type="PDBsum" id="3DYL"/>
<dbReference type="PDBsum" id="3DYN"/>
<dbReference type="PDBsum" id="3DYQ"/>
<dbReference type="PDBsum" id="3DYS"/>
<dbReference type="PDBsum" id="3JSI"/>
<dbReference type="PDBsum" id="3JSW"/>
<dbReference type="PDBsum" id="3K3E"/>
<dbReference type="PDBsum" id="3K3H"/>
<dbReference type="PDBsum" id="3N3Z"/>
<dbReference type="PDBsum" id="3QI3"/>
<dbReference type="PDBsum" id="3QI4"/>
<dbReference type="PDBsum" id="4E90"/>
<dbReference type="PDBsum" id="4G2J"/>
<dbReference type="PDBsum" id="4G2L"/>
<dbReference type="PDBsum" id="4GH6"/>
<dbReference type="PDBsum" id="4Y86"/>
<dbReference type="PDBsum" id="4Y87"/>
<dbReference type="PDBsum" id="4Y8C"/>
<dbReference type="PDBsum" id="6A3N"/>
<dbReference type="PDBsum" id="6LZZ"/>
<dbReference type="PDBsum" id="7F0I"/>
<dbReference type="PDBsum" id="8BPY"/>
<dbReference type="SMR" id="O76083"/>
<dbReference type="BioGRID" id="111178">
    <property type="interactions" value="63"/>
</dbReference>
<dbReference type="CORUM" id="O76083"/>
<dbReference type="FunCoup" id="O76083">
    <property type="interactions" value="442"/>
</dbReference>
<dbReference type="IntAct" id="O76083">
    <property type="interactions" value="42"/>
</dbReference>
<dbReference type="MINT" id="O76083"/>
<dbReference type="STRING" id="9606.ENSP00000291539"/>
<dbReference type="BindingDB" id="O76083"/>
<dbReference type="ChEMBL" id="CHEMBL3535"/>
<dbReference type="DrugBank" id="DB07954">
    <property type="generic name" value="3-isobutyl-1-methyl-7H-xanthine"/>
</dbReference>
<dbReference type="DrugBank" id="DB00201">
    <property type="generic name" value="Caffeine"/>
</dbReference>
<dbReference type="DrugBank" id="DB03597">
    <property type="generic name" value="gamma-Glutamyl[S-(2-iodobenzyl)cysteinyl]glycine"/>
</dbReference>
<dbReference type="DrugBank" id="DB16274">
    <property type="generic name" value="Osoresnontrine"/>
</dbReference>
<dbReference type="DrugBank" id="DB11953">
    <property type="generic name" value="PF-04447943"/>
</dbReference>
<dbReference type="DrugBank" id="DB16193">
    <property type="generic name" value="Tovinontrine"/>
</dbReference>
<dbReference type="DrugBank" id="DB09283">
    <property type="generic name" value="Trapidil"/>
</dbReference>
<dbReference type="DrugCentral" id="O76083"/>
<dbReference type="GuidetoPHARMACOLOGY" id="1309"/>
<dbReference type="GlyGen" id="O76083">
    <property type="glycosylation" value="1 site, 1 O-linked glycan (1 site)"/>
</dbReference>
<dbReference type="iPTMnet" id="O76083"/>
<dbReference type="PhosphoSitePlus" id="O76083"/>
<dbReference type="BioMuta" id="PDE9A"/>
<dbReference type="MassIVE" id="O76083"/>
<dbReference type="PaxDb" id="9606-ENSP00000291539"/>
<dbReference type="PeptideAtlas" id="O76083"/>
<dbReference type="ProteomicsDB" id="50391">
    <molecule id="O76083-1"/>
</dbReference>
<dbReference type="ProteomicsDB" id="50392">
    <molecule id="O76083-10"/>
</dbReference>
<dbReference type="ProteomicsDB" id="50393">
    <molecule id="O76083-11"/>
</dbReference>
<dbReference type="ProteomicsDB" id="50394">
    <molecule id="O76083-12"/>
</dbReference>
<dbReference type="ProteomicsDB" id="50395">
    <molecule id="O76083-13"/>
</dbReference>
<dbReference type="ProteomicsDB" id="50396">
    <molecule id="O76083-14"/>
</dbReference>
<dbReference type="ProteomicsDB" id="50397">
    <molecule id="O76083-15"/>
</dbReference>
<dbReference type="ProteomicsDB" id="50398">
    <molecule id="O76083-16"/>
</dbReference>
<dbReference type="ProteomicsDB" id="50399">
    <molecule id="O76083-2"/>
</dbReference>
<dbReference type="ProteomicsDB" id="50400">
    <molecule id="O76083-3"/>
</dbReference>
<dbReference type="ProteomicsDB" id="50401">
    <molecule id="O76083-4"/>
</dbReference>
<dbReference type="ProteomicsDB" id="50402">
    <molecule id="O76083-5"/>
</dbReference>
<dbReference type="ProteomicsDB" id="50403">
    <molecule id="O76083-6"/>
</dbReference>
<dbReference type="ProteomicsDB" id="50404">
    <molecule id="O76083-7"/>
</dbReference>
<dbReference type="ProteomicsDB" id="50405">
    <molecule id="O76083-8"/>
</dbReference>
<dbReference type="ProteomicsDB" id="50406">
    <molecule id="O76083-9"/>
</dbReference>
<dbReference type="Antibodypedia" id="1648">
    <property type="antibodies" value="226 antibodies from 32 providers"/>
</dbReference>
<dbReference type="DNASU" id="5152"/>
<dbReference type="Ensembl" id="ENST00000291539.11">
    <molecule id="O76083-1"/>
    <property type="protein sequence ID" value="ENSP00000291539.6"/>
    <property type="gene ID" value="ENSG00000160191.18"/>
</dbReference>
<dbReference type="Ensembl" id="ENST00000328862.10">
    <molecule id="O76083-15"/>
    <property type="protein sequence ID" value="ENSP00000328699.6"/>
    <property type="gene ID" value="ENSG00000160191.18"/>
</dbReference>
<dbReference type="Ensembl" id="ENST00000335440.10">
    <molecule id="O76083-12"/>
    <property type="protein sequence ID" value="ENSP00000335365.6"/>
    <property type="gene ID" value="ENSG00000160191.18"/>
</dbReference>
<dbReference type="Ensembl" id="ENST00000335512.8">
    <molecule id="O76083-2"/>
    <property type="protein sequence ID" value="ENSP00000335242.4"/>
    <property type="gene ID" value="ENSG00000160191.18"/>
</dbReference>
<dbReference type="Ensembl" id="ENST00000349112.7">
    <molecule id="O76083-4"/>
    <property type="protein sequence ID" value="ENSP00000344730.3"/>
    <property type="gene ID" value="ENSG00000160191.18"/>
</dbReference>
<dbReference type="Ensembl" id="ENST00000380328.6">
    <molecule id="O76083-5"/>
    <property type="protein sequence ID" value="ENSP00000369685.2"/>
    <property type="gene ID" value="ENSG00000160191.18"/>
</dbReference>
<dbReference type="Ensembl" id="ENST00000398224.3">
    <molecule id="O76083-3"/>
    <property type="protein sequence ID" value="ENSP00000381280.3"/>
    <property type="gene ID" value="ENSG00000160191.18"/>
</dbReference>
<dbReference type="Ensembl" id="ENST00000398225.7">
    <molecule id="O76083-14"/>
    <property type="protein sequence ID" value="ENSP00000381281.3"/>
    <property type="gene ID" value="ENSG00000160191.18"/>
</dbReference>
<dbReference type="Ensembl" id="ENST00000398227.7">
    <molecule id="O76083-9"/>
    <property type="protein sequence ID" value="ENSP00000381283.3"/>
    <property type="gene ID" value="ENSG00000160191.18"/>
</dbReference>
<dbReference type="Ensembl" id="ENST00000398229.7">
    <molecule id="O76083-11"/>
    <property type="protein sequence ID" value="ENSP00000381285.3"/>
    <property type="gene ID" value="ENSG00000160191.18"/>
</dbReference>
<dbReference type="Ensembl" id="ENST00000398232.7">
    <molecule id="O76083-13"/>
    <property type="protein sequence ID" value="ENSP00000381287.3"/>
    <property type="gene ID" value="ENSG00000160191.18"/>
</dbReference>
<dbReference type="Ensembl" id="ENST00000398234.7">
    <molecule id="O76083-6"/>
    <property type="protein sequence ID" value="ENSP00000381289.3"/>
    <property type="gene ID" value="ENSG00000160191.18"/>
</dbReference>
<dbReference type="Ensembl" id="ENST00000398236.7">
    <molecule id="O76083-8"/>
    <property type="protein sequence ID" value="ENSP00000381291.3"/>
    <property type="gene ID" value="ENSG00000160191.18"/>
</dbReference>
<dbReference type="GeneID" id="5152"/>
<dbReference type="KEGG" id="hsa:5152"/>
<dbReference type="MANE-Select" id="ENST00000291539.11">
    <property type="protein sequence ID" value="ENSP00000291539.6"/>
    <property type="RefSeq nucleotide sequence ID" value="NM_002606.3"/>
    <property type="RefSeq protein sequence ID" value="NP_002597.1"/>
</dbReference>
<dbReference type="UCSC" id="uc002zbm.4">
    <molecule id="O76083-1"/>
    <property type="organism name" value="human"/>
</dbReference>
<dbReference type="AGR" id="HGNC:8795"/>
<dbReference type="CTD" id="5152"/>
<dbReference type="DisGeNET" id="5152"/>
<dbReference type="GeneCards" id="PDE9A"/>
<dbReference type="HGNC" id="HGNC:8795">
    <property type="gene designation" value="PDE9A"/>
</dbReference>
<dbReference type="HPA" id="ENSG00000160191">
    <property type="expression patterns" value="Tissue enhanced (intestine)"/>
</dbReference>
<dbReference type="MIM" id="602973">
    <property type="type" value="gene"/>
</dbReference>
<dbReference type="neXtProt" id="NX_O76083"/>
<dbReference type="OpenTargets" id="ENSG00000160191"/>
<dbReference type="PharmGKB" id="PA33143"/>
<dbReference type="VEuPathDB" id="HostDB:ENSG00000160191"/>
<dbReference type="eggNOG" id="KOG3689">
    <property type="taxonomic scope" value="Eukaryota"/>
</dbReference>
<dbReference type="GeneTree" id="ENSGT00940000155587"/>
<dbReference type="HOGENOM" id="CLU_032104_1_0_1"/>
<dbReference type="InParanoid" id="O76083"/>
<dbReference type="OMA" id="EKCHNDI"/>
<dbReference type="OrthoDB" id="546632at2759"/>
<dbReference type="PAN-GO" id="O76083">
    <property type="GO annotations" value="3 GO annotations based on evolutionary models"/>
</dbReference>
<dbReference type="PhylomeDB" id="O76083"/>
<dbReference type="TreeFam" id="TF314638"/>
<dbReference type="BRENDA" id="3.1.4.35">
    <property type="organism ID" value="2681"/>
</dbReference>
<dbReference type="PathwayCommons" id="O76083"/>
<dbReference type="Reactome" id="R-HSA-418457">
    <property type="pathway name" value="cGMP effects"/>
</dbReference>
<dbReference type="SABIO-RK" id="O76083"/>
<dbReference type="SignaLink" id="O76083"/>
<dbReference type="SIGNOR" id="O76083"/>
<dbReference type="UniPathway" id="UPA00763">
    <property type="reaction ID" value="UER00748"/>
</dbReference>
<dbReference type="BioGRID-ORCS" id="5152">
    <property type="hits" value="11 hits in 1151 CRISPR screens"/>
</dbReference>
<dbReference type="ChiTaRS" id="PDE9A">
    <property type="organism name" value="human"/>
</dbReference>
<dbReference type="EvolutionaryTrace" id="O76083"/>
<dbReference type="GeneWiki" id="PDE9A"/>
<dbReference type="GenomeRNAi" id="5152"/>
<dbReference type="Pharos" id="O76083">
    <property type="development level" value="Tchem"/>
</dbReference>
<dbReference type="PRO" id="PR:O76083"/>
<dbReference type="Proteomes" id="UP000005640">
    <property type="component" value="Chromosome 21"/>
</dbReference>
<dbReference type="RNAct" id="O76083">
    <property type="molecule type" value="protein"/>
</dbReference>
<dbReference type="Bgee" id="ENSG00000160191">
    <property type="expression patterns" value="Expressed in mucosa of transverse colon and 158 other cell types or tissues"/>
</dbReference>
<dbReference type="ExpressionAtlas" id="O76083">
    <property type="expression patterns" value="baseline and differential"/>
</dbReference>
<dbReference type="GO" id="GO:0005829">
    <property type="term" value="C:cytosol"/>
    <property type="evidence" value="ECO:0000314"/>
    <property type="project" value="HPA"/>
</dbReference>
<dbReference type="GO" id="GO:0005783">
    <property type="term" value="C:endoplasmic reticulum"/>
    <property type="evidence" value="ECO:0007669"/>
    <property type="project" value="UniProtKB-SubCell"/>
</dbReference>
<dbReference type="GO" id="GO:0005794">
    <property type="term" value="C:Golgi apparatus"/>
    <property type="evidence" value="ECO:0007669"/>
    <property type="project" value="UniProtKB-SubCell"/>
</dbReference>
<dbReference type="GO" id="GO:0005654">
    <property type="term" value="C:nucleoplasm"/>
    <property type="evidence" value="ECO:0000314"/>
    <property type="project" value="HPA"/>
</dbReference>
<dbReference type="GO" id="GO:0043204">
    <property type="term" value="C:perikaryon"/>
    <property type="evidence" value="ECO:0007669"/>
    <property type="project" value="Ensembl"/>
</dbReference>
<dbReference type="GO" id="GO:0048471">
    <property type="term" value="C:perinuclear region of cytoplasm"/>
    <property type="evidence" value="ECO:0007669"/>
    <property type="project" value="UniProtKB-SubCell"/>
</dbReference>
<dbReference type="GO" id="GO:0005886">
    <property type="term" value="C:plasma membrane"/>
    <property type="evidence" value="ECO:0000314"/>
    <property type="project" value="HPA"/>
</dbReference>
<dbReference type="GO" id="GO:0032587">
    <property type="term" value="C:ruffle membrane"/>
    <property type="evidence" value="ECO:0007669"/>
    <property type="project" value="UniProtKB-SubCell"/>
</dbReference>
<dbReference type="GO" id="GO:0042383">
    <property type="term" value="C:sarcolemma"/>
    <property type="evidence" value="ECO:0000314"/>
    <property type="project" value="UniProtKB"/>
</dbReference>
<dbReference type="GO" id="GO:0004115">
    <property type="term" value="F:3',5'-cyclic-AMP phosphodiesterase activity"/>
    <property type="evidence" value="ECO:0000318"/>
    <property type="project" value="GO_Central"/>
</dbReference>
<dbReference type="GO" id="GO:0047555">
    <property type="term" value="F:3',5'-cyclic-GMP phosphodiesterase activity"/>
    <property type="evidence" value="ECO:0000314"/>
    <property type="project" value="UniProtKB"/>
</dbReference>
<dbReference type="GO" id="GO:0004114">
    <property type="term" value="F:3',5'-cyclic-nucleotide phosphodiesterase activity"/>
    <property type="evidence" value="ECO:0000304"/>
    <property type="project" value="ProtInc"/>
</dbReference>
<dbReference type="GO" id="GO:0042802">
    <property type="term" value="F:identical protein binding"/>
    <property type="evidence" value="ECO:0000353"/>
    <property type="project" value="IntAct"/>
</dbReference>
<dbReference type="GO" id="GO:0046872">
    <property type="term" value="F:metal ion binding"/>
    <property type="evidence" value="ECO:0007669"/>
    <property type="project" value="UniProtKB-KW"/>
</dbReference>
<dbReference type="GO" id="GO:0019933">
    <property type="term" value="P:cAMP-mediated signaling"/>
    <property type="evidence" value="ECO:0000318"/>
    <property type="project" value="GO_Central"/>
</dbReference>
<dbReference type="GO" id="GO:0046069">
    <property type="term" value="P:cGMP catabolic process"/>
    <property type="evidence" value="ECO:0000314"/>
    <property type="project" value="UniProtKB"/>
</dbReference>
<dbReference type="GO" id="GO:0046068">
    <property type="term" value="P:cGMP metabolic process"/>
    <property type="evidence" value="ECO:0000314"/>
    <property type="project" value="UniProtKB"/>
</dbReference>
<dbReference type="GO" id="GO:2000178">
    <property type="term" value="P:negative regulation of neural precursor cell proliferation"/>
    <property type="evidence" value="ECO:0007669"/>
    <property type="project" value="Ensembl"/>
</dbReference>
<dbReference type="GO" id="GO:0010613">
    <property type="term" value="P:positive regulation of cardiac muscle hypertrophy"/>
    <property type="evidence" value="ECO:0000250"/>
    <property type="project" value="UniProtKB"/>
</dbReference>
<dbReference type="GO" id="GO:1900273">
    <property type="term" value="P:positive regulation of long-term synaptic potentiation"/>
    <property type="evidence" value="ECO:0007669"/>
    <property type="project" value="Ensembl"/>
</dbReference>
<dbReference type="GO" id="GO:0007165">
    <property type="term" value="P:signal transduction"/>
    <property type="evidence" value="ECO:0000304"/>
    <property type="project" value="ProtInc"/>
</dbReference>
<dbReference type="CDD" id="cd00077">
    <property type="entry name" value="HDc"/>
    <property type="match status" value="1"/>
</dbReference>
<dbReference type="FunFam" id="1.10.1300.10:FF:000006">
    <property type="entry name" value="Phosphodiesterase 9A"/>
    <property type="match status" value="1"/>
</dbReference>
<dbReference type="Gene3D" id="1.10.1300.10">
    <property type="entry name" value="3'5'-cyclic nucleotide phosphodiesterase, catalytic domain"/>
    <property type="match status" value="1"/>
</dbReference>
<dbReference type="InterPro" id="IPR003607">
    <property type="entry name" value="HD/PDEase_dom"/>
</dbReference>
<dbReference type="InterPro" id="IPR023088">
    <property type="entry name" value="PDEase"/>
</dbReference>
<dbReference type="InterPro" id="IPR002073">
    <property type="entry name" value="PDEase_catalytic_dom"/>
</dbReference>
<dbReference type="InterPro" id="IPR036971">
    <property type="entry name" value="PDEase_catalytic_dom_sf"/>
</dbReference>
<dbReference type="InterPro" id="IPR023174">
    <property type="entry name" value="PDEase_CS"/>
</dbReference>
<dbReference type="PANTHER" id="PTHR11347">
    <property type="entry name" value="CYCLIC NUCLEOTIDE PHOSPHODIESTERASE"/>
    <property type="match status" value="1"/>
</dbReference>
<dbReference type="Pfam" id="PF00233">
    <property type="entry name" value="PDEase_I"/>
    <property type="match status" value="1"/>
</dbReference>
<dbReference type="PRINTS" id="PR00387">
    <property type="entry name" value="PDIESTERASE1"/>
</dbReference>
<dbReference type="SMART" id="SM00471">
    <property type="entry name" value="HDc"/>
    <property type="match status" value="1"/>
</dbReference>
<dbReference type="SUPFAM" id="SSF109604">
    <property type="entry name" value="HD-domain/PDEase-like"/>
    <property type="match status" value="1"/>
</dbReference>
<dbReference type="PROSITE" id="PS00126">
    <property type="entry name" value="PDEASE_I_1"/>
    <property type="match status" value="1"/>
</dbReference>
<dbReference type="PROSITE" id="PS51845">
    <property type="entry name" value="PDEASE_I_2"/>
    <property type="match status" value="1"/>
</dbReference>
<organism>
    <name type="scientific">Homo sapiens</name>
    <name type="common">Human</name>
    <dbReference type="NCBI Taxonomy" id="9606"/>
    <lineage>
        <taxon>Eukaryota</taxon>
        <taxon>Metazoa</taxon>
        <taxon>Chordata</taxon>
        <taxon>Craniata</taxon>
        <taxon>Vertebrata</taxon>
        <taxon>Euteleostomi</taxon>
        <taxon>Mammalia</taxon>
        <taxon>Eutheria</taxon>
        <taxon>Euarchontoglires</taxon>
        <taxon>Primates</taxon>
        <taxon>Haplorrhini</taxon>
        <taxon>Catarrhini</taxon>
        <taxon>Hominidae</taxon>
        <taxon>Homo</taxon>
    </lineage>
</organism>
<evidence type="ECO:0000250" key="1">
    <source>
        <dbReference type="UniProtKB" id="Q8QZV1"/>
    </source>
</evidence>
<evidence type="ECO:0000255" key="2">
    <source>
        <dbReference type="PROSITE-ProRule" id="PRU01192"/>
    </source>
</evidence>
<evidence type="ECO:0000256" key="3">
    <source>
        <dbReference type="SAM" id="MobiDB-lite"/>
    </source>
</evidence>
<evidence type="ECO:0000269" key="4">
    <source>
    </source>
</evidence>
<evidence type="ECO:0000269" key="5">
    <source>
    </source>
</evidence>
<evidence type="ECO:0000269" key="6">
    <source>
    </source>
</evidence>
<evidence type="ECO:0000269" key="7">
    <source>
    </source>
</evidence>
<evidence type="ECO:0000269" key="8">
    <source>
    </source>
</evidence>
<evidence type="ECO:0000269" key="9">
    <source>
    </source>
</evidence>
<evidence type="ECO:0000269" key="10">
    <source>
    </source>
</evidence>
<evidence type="ECO:0000269" key="11">
    <source>
    </source>
</evidence>
<evidence type="ECO:0000269" key="12">
    <source>
    </source>
</evidence>
<evidence type="ECO:0000269" key="13">
    <source>
    </source>
</evidence>
<evidence type="ECO:0000269" key="14">
    <source>
    </source>
</evidence>
<evidence type="ECO:0000269" key="15">
    <source>
    </source>
</evidence>
<evidence type="ECO:0000269" key="16">
    <source>
    </source>
</evidence>
<evidence type="ECO:0000303" key="17">
    <source>
    </source>
</evidence>
<evidence type="ECO:0000303" key="18">
    <source>
    </source>
</evidence>
<evidence type="ECO:0000303" key="19">
    <source>
    </source>
</evidence>
<evidence type="ECO:0000303" key="20">
    <source>
    </source>
</evidence>
<evidence type="ECO:0000303" key="21">
    <source>
    </source>
</evidence>
<evidence type="ECO:0000303" key="22">
    <source>
    </source>
</evidence>
<evidence type="ECO:0000303" key="23">
    <source>
    </source>
</evidence>
<evidence type="ECO:0000303" key="24">
    <source ref="7"/>
</evidence>
<evidence type="ECO:0000305" key="25"/>
<evidence type="ECO:0000305" key="26">
    <source>
    </source>
</evidence>
<evidence type="ECO:0000305" key="27">
    <source>
    </source>
</evidence>
<evidence type="ECO:0000305" key="28">
    <source>
    </source>
</evidence>
<evidence type="ECO:0000312" key="29">
    <source>
        <dbReference type="HGNC" id="HGNC:8795"/>
    </source>
</evidence>
<evidence type="ECO:0007744" key="30">
    <source>
        <dbReference type="PDB" id="2HD1"/>
    </source>
</evidence>
<evidence type="ECO:0007744" key="31">
    <source>
        <dbReference type="PDB" id="2YY2"/>
    </source>
</evidence>
<evidence type="ECO:0007744" key="32">
    <source>
        <dbReference type="PDB" id="3DYN"/>
    </source>
</evidence>
<evidence type="ECO:0007744" key="33">
    <source>
        <dbReference type="PDB" id="3JSI"/>
    </source>
</evidence>
<evidence type="ECO:0007744" key="34">
    <source>
        <dbReference type="PDB" id="3JSW"/>
    </source>
</evidence>
<evidence type="ECO:0007744" key="35">
    <source>
        <dbReference type="PDB" id="3K3E"/>
    </source>
</evidence>
<evidence type="ECO:0007744" key="36">
    <source>
        <dbReference type="PDB" id="3K3H"/>
    </source>
</evidence>
<evidence type="ECO:0007744" key="37">
    <source>
        <dbReference type="PDB" id="3N3Z"/>
    </source>
</evidence>
<evidence type="ECO:0007744" key="38">
    <source>
        <dbReference type="PDB" id="3QI3"/>
    </source>
</evidence>
<evidence type="ECO:0007744" key="39">
    <source>
        <dbReference type="PDB" id="3QI4"/>
    </source>
</evidence>
<evidence type="ECO:0007744" key="40">
    <source>
        <dbReference type="PDB" id="4E90"/>
    </source>
</evidence>
<evidence type="ECO:0007744" key="41">
    <source>
        <dbReference type="PDB" id="4G2J"/>
    </source>
</evidence>
<evidence type="ECO:0007744" key="42">
    <source>
        <dbReference type="PDB" id="4G2L"/>
    </source>
</evidence>
<evidence type="ECO:0007744" key="43">
    <source>
        <dbReference type="PDB" id="4GH6"/>
    </source>
</evidence>
<evidence type="ECO:0007829" key="44">
    <source>
        <dbReference type="PDB" id="2HD1"/>
    </source>
</evidence>
<evidence type="ECO:0007829" key="45">
    <source>
        <dbReference type="PDB" id="3DYN"/>
    </source>
</evidence>
<evidence type="ECO:0007829" key="46">
    <source>
        <dbReference type="PDB" id="4Y86"/>
    </source>
</evidence>
<accession>O76083</accession>
<accession>B2RBI5</accession>
<accession>B4DFI5</accession>
<accession>D3DSJ8</accession>
<accession>D3DSJ9</accession>
<accession>O75490</accession>
<accession>O75491</accession>
<accession>O95225</accession>
<accession>Q53Y40</accession>
<accession>Q5QD39</accession>
<accession>Q86SF7</accession>
<accession>Q86SI6</accession>
<accession>Q86SJ3</accession>
<accession>Q86WN3</accession>
<accession>Q86WN4</accession>
<accession>Q86WN5</accession>
<accession>Q86WN6</accession>
<accession>Q86WN7</accession>
<accession>Q86WN8</accession>
<accession>Q86WN9</accession>
<accession>Q86WP0</accession>
<reference key="1">
    <citation type="journal article" date="1998" name="J. Biol. Chem.">
        <title>Isolation and characterization of PDE9A, a novel human cGMP-specific phosphodiesterase.</title>
        <authorList>
            <person name="Fisher D.A."/>
            <person name="Smith J.F."/>
            <person name="Pillar J.S."/>
            <person name="St Denis S.H."/>
            <person name="Cheng J.B."/>
        </authorList>
    </citation>
    <scope>NUCLEOTIDE SEQUENCE [MRNA] (ISOFORM PDE9A1)</scope>
    <scope>FUNCTION</scope>
    <scope>CATALYTIC ACTIVITY</scope>
    <scope>ACTIVITY REGULATION</scope>
    <scope>TISSUE SPECIFICITY</scope>
    <source>
        <tissue>Brain</tissue>
        <tissue>Prostate</tissue>
        <tissue>Testis</tissue>
    </source>
</reference>
<reference key="2">
    <citation type="journal article" date="1998" name="Hum. Genet.">
        <title>Identification and characterization of a novel cyclic nucleotide phosphodiesterase gene (PDE9A) that maps to 21q22.3: alternative splicing of mRNA transcripts, genomic structure and sequence.</title>
        <authorList>
            <person name="Guipponi M."/>
            <person name="Scott H.S."/>
            <person name="Kudoh J."/>
            <person name="Kawasaki K."/>
            <person name="Shibuya K."/>
            <person name="Shintani A."/>
            <person name="Asakawa S."/>
            <person name="Chen H."/>
            <person name="Lalioti M.D."/>
            <person name="Rossier C."/>
            <person name="Minoshima S."/>
            <person name="Shimizu N."/>
            <person name="Antonarakis S.E."/>
        </authorList>
    </citation>
    <scope>NUCLEOTIDE SEQUENCE [GENOMIC DNA / MRNA] (ISOFORMS PDE9A1; PDE9A2; PDE9A3 AND PDE9A4)</scope>
    <source>
        <tissue>Fetal brain</tissue>
    </source>
</reference>
<reference key="3">
    <citation type="journal article" date="2003" name="Biochem. Biophys. Res. Commun.">
        <title>Identification and distribution of different mRNA variants produced by differential splicing in the human phosphodiesterase 9A gene.</title>
        <authorList>
            <person name="Rentero C."/>
            <person name="Monfort A."/>
            <person name="Puigdomenech P."/>
        </authorList>
    </citation>
    <scope>NUCLEOTIDE SEQUENCE [MRNA] (ISOFORMS PDE9A5; PDE9A6; PDE9A7; PDE9A9; PDE9A10; PDE9A11; PDE9A12; PDE9A13; PDE9A16; PDE9A17 AND PDE9A18)</scope>
    <scope>TISSUE SPECIFICITY</scope>
</reference>
<reference key="4">
    <citation type="journal article" date="2003" name="Gene">
        <title>Identification and characterization of a new human type 9 cGMP-specific phosphodiesterase splice variant (PDE9A5). Differential tissue distribution and subcellular localization of PDE9A variants.</title>
        <authorList>
            <person name="Wang P."/>
            <person name="Wu P."/>
            <person name="Egan R.W."/>
            <person name="Billah M.M."/>
        </authorList>
    </citation>
    <scope>NUCLEOTIDE SEQUENCE [MRNA] (ISOFORM PDE9A6)</scope>
    <source>
        <tissue>Brain</tissue>
        <tissue>Small intestine</tissue>
        <tissue>Spleen</tissue>
    </source>
</reference>
<reference key="5">
    <citation type="journal article" date="2006" name="BMC Mol. Biol.">
        <title>Specific use of start codons and cellular localization of splice variants of human phosphodiesterase 9A gene.</title>
        <authorList>
            <person name="Rentero C."/>
            <person name="Puigdomenech P."/>
        </authorList>
    </citation>
    <scope>NUCLEOTIDE SEQUENCE [MRNA] (ISOFORM PDE9A21)</scope>
    <scope>SUBCELLULAR LOCATION</scope>
</reference>
<reference key="6">
    <citation type="journal article" date="2004" name="Nat. Genet.">
        <title>Complete sequencing and characterization of 21,243 full-length human cDNAs.</title>
        <authorList>
            <person name="Ota T."/>
            <person name="Suzuki Y."/>
            <person name="Nishikawa T."/>
            <person name="Otsuki T."/>
            <person name="Sugiyama T."/>
            <person name="Irie R."/>
            <person name="Wakamatsu A."/>
            <person name="Hayashi K."/>
            <person name="Sato H."/>
            <person name="Nagai K."/>
            <person name="Kimura K."/>
            <person name="Makita H."/>
            <person name="Sekine M."/>
            <person name="Obayashi M."/>
            <person name="Nishi T."/>
            <person name="Shibahara T."/>
            <person name="Tanaka T."/>
            <person name="Ishii S."/>
            <person name="Yamamoto J."/>
            <person name="Saito K."/>
            <person name="Kawai Y."/>
            <person name="Isono Y."/>
            <person name="Nakamura Y."/>
            <person name="Nagahari K."/>
            <person name="Murakami K."/>
            <person name="Yasuda T."/>
            <person name="Iwayanagi T."/>
            <person name="Wagatsuma M."/>
            <person name="Shiratori A."/>
            <person name="Sudo H."/>
            <person name="Hosoiri T."/>
            <person name="Kaku Y."/>
            <person name="Kodaira H."/>
            <person name="Kondo H."/>
            <person name="Sugawara M."/>
            <person name="Takahashi M."/>
            <person name="Kanda K."/>
            <person name="Yokoi T."/>
            <person name="Furuya T."/>
            <person name="Kikkawa E."/>
            <person name="Omura Y."/>
            <person name="Abe K."/>
            <person name="Kamihara K."/>
            <person name="Katsuta N."/>
            <person name="Sato K."/>
            <person name="Tanikawa M."/>
            <person name="Yamazaki M."/>
            <person name="Ninomiya K."/>
            <person name="Ishibashi T."/>
            <person name="Yamashita H."/>
            <person name="Murakawa K."/>
            <person name="Fujimori K."/>
            <person name="Tanai H."/>
            <person name="Kimata M."/>
            <person name="Watanabe M."/>
            <person name="Hiraoka S."/>
            <person name="Chiba Y."/>
            <person name="Ishida S."/>
            <person name="Ono Y."/>
            <person name="Takiguchi S."/>
            <person name="Watanabe S."/>
            <person name="Yosida M."/>
            <person name="Hotuta T."/>
            <person name="Kusano J."/>
            <person name="Kanehori K."/>
            <person name="Takahashi-Fujii A."/>
            <person name="Hara H."/>
            <person name="Tanase T.-O."/>
            <person name="Nomura Y."/>
            <person name="Togiya S."/>
            <person name="Komai F."/>
            <person name="Hara R."/>
            <person name="Takeuchi K."/>
            <person name="Arita M."/>
            <person name="Imose N."/>
            <person name="Musashino K."/>
            <person name="Yuuki H."/>
            <person name="Oshima A."/>
            <person name="Sasaki N."/>
            <person name="Aotsuka S."/>
            <person name="Yoshikawa Y."/>
            <person name="Matsunawa H."/>
            <person name="Ichihara T."/>
            <person name="Shiohata N."/>
            <person name="Sano S."/>
            <person name="Moriya S."/>
            <person name="Momiyama H."/>
            <person name="Satoh N."/>
            <person name="Takami S."/>
            <person name="Terashima Y."/>
            <person name="Suzuki O."/>
            <person name="Nakagawa S."/>
            <person name="Senoh A."/>
            <person name="Mizoguchi H."/>
            <person name="Goto Y."/>
            <person name="Shimizu F."/>
            <person name="Wakebe H."/>
            <person name="Hishigaki H."/>
            <person name="Watanabe T."/>
            <person name="Sugiyama A."/>
            <person name="Takemoto M."/>
            <person name="Kawakami B."/>
            <person name="Yamazaki M."/>
            <person name="Watanabe K."/>
            <person name="Kumagai A."/>
            <person name="Itakura S."/>
            <person name="Fukuzumi Y."/>
            <person name="Fujimori Y."/>
            <person name="Komiyama M."/>
            <person name="Tashiro H."/>
            <person name="Tanigami A."/>
            <person name="Fujiwara T."/>
            <person name="Ono T."/>
            <person name="Yamada K."/>
            <person name="Fujii Y."/>
            <person name="Ozaki K."/>
            <person name="Hirao M."/>
            <person name="Ohmori Y."/>
            <person name="Kawabata A."/>
            <person name="Hikiji T."/>
            <person name="Kobatake N."/>
            <person name="Inagaki H."/>
            <person name="Ikema Y."/>
            <person name="Okamoto S."/>
            <person name="Okitani R."/>
            <person name="Kawakami T."/>
            <person name="Noguchi S."/>
            <person name="Itoh T."/>
            <person name="Shigeta K."/>
            <person name="Senba T."/>
            <person name="Matsumura K."/>
            <person name="Nakajima Y."/>
            <person name="Mizuno T."/>
            <person name="Morinaga M."/>
            <person name="Sasaki M."/>
            <person name="Togashi T."/>
            <person name="Oyama M."/>
            <person name="Hata H."/>
            <person name="Watanabe M."/>
            <person name="Komatsu T."/>
            <person name="Mizushima-Sugano J."/>
            <person name="Satoh T."/>
            <person name="Shirai Y."/>
            <person name="Takahashi Y."/>
            <person name="Nakagawa K."/>
            <person name="Okumura K."/>
            <person name="Nagase T."/>
            <person name="Nomura N."/>
            <person name="Kikuchi H."/>
            <person name="Masuho Y."/>
            <person name="Yamashita R."/>
            <person name="Nakai K."/>
            <person name="Yada T."/>
            <person name="Nakamura Y."/>
            <person name="Ohara O."/>
            <person name="Isogai T."/>
            <person name="Sugano S."/>
        </authorList>
    </citation>
    <scope>NUCLEOTIDE SEQUENCE [LARGE SCALE MRNA] (ISOFORMS PDE9A1 AND PDE9A3)</scope>
</reference>
<reference key="7">
    <citation type="submission" date="2003-05" db="EMBL/GenBank/DDBJ databases">
        <title>Cloning of human full-length CDSs in BD Creator(TM) system donor vector.</title>
        <authorList>
            <person name="Kalnine N."/>
            <person name="Chen X."/>
            <person name="Rolfs A."/>
            <person name="Halleck A."/>
            <person name="Hines L."/>
            <person name="Eisenstein S."/>
            <person name="Koundinya M."/>
            <person name="Raphael J."/>
            <person name="Moreira D."/>
            <person name="Kelley T."/>
            <person name="LaBaer J."/>
            <person name="Lin Y."/>
            <person name="Phelan M."/>
            <person name="Farmer A."/>
        </authorList>
    </citation>
    <scope>NUCLEOTIDE SEQUENCE [LARGE SCALE MRNA] (ISOFORM PDE9A2)</scope>
</reference>
<reference key="8">
    <citation type="journal article" date="2000" name="Nature">
        <title>The DNA sequence of human chromosome 21.</title>
        <authorList>
            <person name="Hattori M."/>
            <person name="Fujiyama A."/>
            <person name="Taylor T.D."/>
            <person name="Watanabe H."/>
            <person name="Yada T."/>
            <person name="Park H.-S."/>
            <person name="Toyoda A."/>
            <person name="Ishii K."/>
            <person name="Totoki Y."/>
            <person name="Choi D.-K."/>
            <person name="Groner Y."/>
            <person name="Soeda E."/>
            <person name="Ohki M."/>
            <person name="Takagi T."/>
            <person name="Sakaki Y."/>
            <person name="Taudien S."/>
            <person name="Blechschmidt K."/>
            <person name="Polley A."/>
            <person name="Menzel U."/>
            <person name="Delabar J."/>
            <person name="Kumpf K."/>
            <person name="Lehmann R."/>
            <person name="Patterson D."/>
            <person name="Reichwald K."/>
            <person name="Rump A."/>
            <person name="Schillhabel M."/>
            <person name="Schudy A."/>
            <person name="Zimmermann W."/>
            <person name="Rosenthal A."/>
            <person name="Kudoh J."/>
            <person name="Shibuya K."/>
            <person name="Kawasaki K."/>
            <person name="Asakawa S."/>
            <person name="Shintani A."/>
            <person name="Sasaki T."/>
            <person name="Nagamine K."/>
            <person name="Mitsuyama S."/>
            <person name="Antonarakis S.E."/>
            <person name="Minoshima S."/>
            <person name="Shimizu N."/>
            <person name="Nordsiek G."/>
            <person name="Hornischer K."/>
            <person name="Brandt P."/>
            <person name="Scharfe M."/>
            <person name="Schoen O."/>
            <person name="Desario A."/>
            <person name="Reichelt J."/>
            <person name="Kauer G."/>
            <person name="Bloecker H."/>
            <person name="Ramser J."/>
            <person name="Beck A."/>
            <person name="Klages S."/>
            <person name="Hennig S."/>
            <person name="Riesselmann L."/>
            <person name="Dagand E."/>
            <person name="Wehrmeyer S."/>
            <person name="Borzym K."/>
            <person name="Gardiner K."/>
            <person name="Nizetic D."/>
            <person name="Francis F."/>
            <person name="Lehrach H."/>
            <person name="Reinhardt R."/>
            <person name="Yaspo M.-L."/>
        </authorList>
    </citation>
    <scope>NUCLEOTIDE SEQUENCE [LARGE SCALE GENOMIC DNA]</scope>
</reference>
<reference key="9">
    <citation type="submission" date="2005-09" db="EMBL/GenBank/DDBJ databases">
        <authorList>
            <person name="Mural R.J."/>
            <person name="Istrail S."/>
            <person name="Sutton G.G."/>
            <person name="Florea L."/>
            <person name="Halpern A.L."/>
            <person name="Mobarry C.M."/>
            <person name="Lippert R."/>
            <person name="Walenz B."/>
            <person name="Shatkay H."/>
            <person name="Dew I."/>
            <person name="Miller J.R."/>
            <person name="Flanigan M.J."/>
            <person name="Edwards N.J."/>
            <person name="Bolanos R."/>
            <person name="Fasulo D."/>
            <person name="Halldorsson B.V."/>
            <person name="Hannenhalli S."/>
            <person name="Turner R."/>
            <person name="Yooseph S."/>
            <person name="Lu F."/>
            <person name="Nusskern D.R."/>
            <person name="Shue B.C."/>
            <person name="Zheng X.H."/>
            <person name="Zhong F."/>
            <person name="Delcher A.L."/>
            <person name="Huson D.H."/>
            <person name="Kravitz S.A."/>
            <person name="Mouchard L."/>
            <person name="Reinert K."/>
            <person name="Remington K.A."/>
            <person name="Clark A.G."/>
            <person name="Waterman M.S."/>
            <person name="Eichler E.E."/>
            <person name="Adams M.D."/>
            <person name="Hunkapiller M.W."/>
            <person name="Myers E.W."/>
            <person name="Venter J.C."/>
        </authorList>
    </citation>
    <scope>NUCLEOTIDE SEQUENCE [LARGE SCALE GENOMIC DNA]</scope>
</reference>
<reference key="10">
    <citation type="journal article" date="2004" name="Genome Res.">
        <title>The status, quality, and expansion of the NIH full-length cDNA project: the Mammalian Gene Collection (MGC).</title>
        <authorList>
            <consortium name="The MGC Project Team"/>
        </authorList>
    </citation>
    <scope>NUCLEOTIDE SEQUENCE [LARGE SCALE MRNA] (ISOFORM PDE9A2)</scope>
    <source>
        <tissue>Eye</tissue>
    </source>
</reference>
<reference key="11">
    <citation type="journal article" date="2005" name="Mol. Pharmacol.">
        <title>Characterization of the first potent and selective PDE9 inhibitor using a cGMP reporter cell line.</title>
        <authorList>
            <person name="Wunder F."/>
            <person name="Tersteegen A."/>
            <person name="Rebmann A."/>
            <person name="Erb C."/>
            <person name="Fahrig T."/>
            <person name="Hendrix M."/>
        </authorList>
    </citation>
    <scope>ACTIVITY REGULATION</scope>
</reference>
<reference key="12">
    <citation type="journal article" date="2012" name="J. Pharmacol. Exp. Ther.">
        <title>Phosphodiesterase 9A regulates central cGMP and modulates responses to cholinergic and monoaminergic perturbation in vivo.</title>
        <authorList>
            <person name="Kleiman R.J."/>
            <person name="Chapin D.S."/>
            <person name="Christoffersen C."/>
            <person name="Freeman J."/>
            <person name="Fonseca K.R."/>
            <person name="Geoghegan K.F."/>
            <person name="Grimwood S."/>
            <person name="Guanowsky V."/>
            <person name="Hajos M."/>
            <person name="Harms J.F."/>
            <person name="Helal C.J."/>
            <person name="Hoffmann W.E."/>
            <person name="Kocan G.P."/>
            <person name="Majchrzak M.J."/>
            <person name="McGinnis D."/>
            <person name="McLean S."/>
            <person name="Menniti F.S."/>
            <person name="Nelson F."/>
            <person name="Roof R."/>
            <person name="Schmidt A.W."/>
            <person name="Seymour P.A."/>
            <person name="Stephenson D.T."/>
            <person name="Tingley F.D."/>
            <person name="Vanase-Frawley M."/>
            <person name="Verhoest P.R."/>
            <person name="Schmidt C.J."/>
        </authorList>
    </citation>
    <scope>TISSUE SPECIFICITY</scope>
</reference>
<reference key="13">
    <citation type="journal article" date="2014" name="Life Sci.">
        <title>Phosphodiesterase 9: insights from protein structure and role in therapeutics.</title>
        <authorList>
            <person name="Singh N."/>
            <person name="Patra S."/>
        </authorList>
    </citation>
    <scope>REVIEW</scope>
</reference>
<reference key="14">
    <citation type="journal article" date="2015" name="Nature">
        <title>Phosphodiesterase 9A controls nitric-oxide-independent cGMP and hypertrophic heart disease.</title>
        <authorList>
            <person name="Lee D.I."/>
            <person name="Zhu G."/>
            <person name="Sasaki T."/>
            <person name="Cho G.S."/>
            <person name="Hamdani N."/>
            <person name="Holewinski R."/>
            <person name="Jo S.H."/>
            <person name="Danner T."/>
            <person name="Zhang M."/>
            <person name="Rainer P.P."/>
            <person name="Bedja D."/>
            <person name="Kirk J.A."/>
            <person name="Ranek M.J."/>
            <person name="Dostmann W.R."/>
            <person name="Kwon C."/>
            <person name="Margulies K.B."/>
            <person name="Van Eyk J.E."/>
            <person name="Paulus W.J."/>
            <person name="Takimoto E."/>
            <person name="Kass D.A."/>
        </authorList>
    </citation>
    <scope>FUNCTION</scope>
    <scope>ACTIVITY REGULATION</scope>
    <scope>SUBCELLULAR LOCATION</scope>
    <scope>TISSUE SPECIFICITY</scope>
    <scope>INDUCTION</scope>
</reference>
<reference key="15">
    <citation type="journal article" date="2004" name="Proc. Natl. Acad. Sci. U.S.A.">
        <title>Crystal structure of phosphodiesterase 9 shows orientation variation of inhibitor 3-isobutyl-1-methylxanthine binding.</title>
        <authorList>
            <person name="Huai Q."/>
            <person name="Wang H."/>
            <person name="Zhang W."/>
            <person name="Colman R.W."/>
            <person name="Robinson H."/>
            <person name="Ke H."/>
        </authorList>
    </citation>
    <scope>X-RAY CRYSTALLOGRAPHY (2.23 ANGSTROMS) OF 241-566 IN COMPLEX WITH THE INHIBITOR IBMX</scope>
    <scope>SUBUNIT</scope>
</reference>
<reference key="16">
    <citation type="journal article" date="2008" name="Proc. Natl. Acad. Sci. U.S.A.">
        <title>Structural basis for the catalytic mechanism of human phosphodiesterase 9.</title>
        <authorList>
            <person name="Liu S."/>
            <person name="Mansour M.N."/>
            <person name="Dillman K.S."/>
            <person name="Perez J.R."/>
            <person name="Danley D.E."/>
            <person name="Aeed P.A."/>
            <person name="Simons S.P."/>
            <person name="Lemotte P.K."/>
            <person name="Menniti F.S."/>
        </authorList>
    </citation>
    <scope>X-RAY CRYSTALLOGRAPHY (2.10 ANGSTROMS) OF 242-566 IN COMPLEX WITH MAGNESIUM; ZINC; GMP AND CGMP</scope>
    <scope>ACTIVE SITE</scope>
    <scope>FUNCTION</scope>
    <scope>CATALYTIC ACTIVITY</scope>
    <scope>COFACTOR</scope>
    <scope>MUTAGENESIS OF HIS-312 AND HIS-356</scope>
</reference>
<reference key="17">
    <citation type="submission" date="2009-02" db="PDB data bank">
        <title>Crystal structure of the human phosphodiesterase 9a catalytic domain.</title>
        <authorList>
            <consortium name="RIKEN structural genomics initiative (RSGI)"/>
        </authorList>
    </citation>
    <scope>X-RAY CRYSTALLOGRAPHY (2.80 ANGSTROMS) OF 241-566 IN COMPLEX WITH ZINC</scope>
</reference>
<reference evidence="33 34" key="18">
    <citation type="journal article" date="2009" name="J. Med. Chem.">
        <title>Identification of a brain penetrant PDE9A inhibitor utilizing prospective design and chemical enablement as a rapid lead optimization strategy.</title>
        <authorList>
            <person name="Verhoest P.R."/>
            <person name="Proulx-Lafrance C."/>
            <person name="Corman M."/>
            <person name="Chenard L."/>
            <person name="Helal C.J."/>
            <person name="Hou X."/>
            <person name="Kleiman R."/>
            <person name="Liu S."/>
            <person name="Marr E."/>
            <person name="Menniti F.S."/>
            <person name="Schmidt C.J."/>
            <person name="Vanase-Frawley M."/>
            <person name="Schmidt A.W."/>
            <person name="Williams R.D."/>
            <person name="Nelson F.R."/>
            <person name="Fonseca K.R."/>
            <person name="Liras S."/>
        </authorList>
    </citation>
    <scope>X-RAY CRYSTALLOGRAPHY (2.30 ANGSTROMS) OF 242-566 IN COMPLEX WITH MAGNESIUM; ZINC AND PF-4181366 INHIBITOR</scope>
    <scope>ACTIVITY REGULATION</scope>
    <scope>COFACTOR</scope>
</reference>
<reference evidence="35 36" key="19">
    <citation type="journal article" date="2010" name="J. Med. Chem.">
        <title>Insight into binding of phosphodiesterase-9A selective inhibitors by crystal structures and mutagenesis.</title>
        <authorList>
            <person name="Wang H."/>
            <person name="Luo X."/>
            <person name="Ye M."/>
            <person name="Hou J."/>
            <person name="Robinson H."/>
            <person name="Ke H."/>
        </authorList>
    </citation>
    <scope>X-RAY CRYSTALLOGRAPHY (2.50 ANGSTROMS) OF 241-566 IN COMPLEX WITH MAGNESIUM; ZINC AND BAY-73-6691 INHIBITOR</scope>
    <scope>ACTIVITY REGULATION</scope>
    <scope>COFACTOR</scope>
    <scope>MUTAGENESIS OF MET-425; ILE-463; LEU-480; TYR-484; PHE-501; GLN-513 AND PHE-516</scope>
</reference>
<reference evidence="38 39" key="20">
    <citation type="journal article" date="2011" name="PLoS ONE">
        <title>Structural asymmetry of phosphodiesterase-9, potential protonation of a glutamic acid, and role of the invariant glutamine.</title>
        <authorList>
            <person name="Hou J."/>
            <person name="Xu J."/>
            <person name="Liu M."/>
            <person name="Zhao R."/>
            <person name="Luo H.B."/>
            <person name="Ke H."/>
        </authorList>
    </citation>
    <scope>X-RAY CRYSTALLOGRAPHY (2.30 ANGSTROMS) OF MUTANT GLU-513 IN COMPLEX WITH MAGNESIUM; ZINC AND (S)-BAY-73-6691 INHIBITOR</scope>
    <scope>ACTIVITY REGULATION</scope>
    <scope>COFACTOR</scope>
    <scope>FUNCTION</scope>
    <scope>CATALYTIC ACTIVITY</scope>
    <scope>SUBUNIT</scope>
    <scope>BIOPHYSICOCHEMICAL PROPERTIES</scope>
    <scope>MUTAGENESIS OF GLU-466 AND GLN-513</scope>
</reference>
<reference evidence="43" key="21">
    <citation type="journal article" date="2012" name="J. Med. Chem.">
        <title>Structure-based discovery of highly selective phosphodiesterase-9A inhibitors and implications for inhibitor design.</title>
        <authorList>
            <person name="Meng F."/>
            <person name="Hou J."/>
            <person name="Shao Y.X."/>
            <person name="Wu P.Y."/>
            <person name="Huang M."/>
            <person name="Zhu X."/>
            <person name="Cai Y."/>
            <person name="Li Z."/>
            <person name="Xu J."/>
            <person name="Liu P."/>
            <person name="Luo H.B."/>
            <person name="Wan Y."/>
            <person name="Ke H."/>
        </authorList>
    </citation>
    <scope>X-RAY CRYSTALLOGRAPHY (2.70 ANGSTROMS) OF 241-566 IN COMPLEX WITH MAGNESIUM; ZINC AND INHIBITOR 28</scope>
    <scope>COFACTOR</scope>
    <scope>ACTIVITY REGULATION</scope>
</reference>
<reference evidence="40 41 42" key="22">
    <citation type="journal article" date="2012" name="J. Med. Chem.">
        <title>Application of structure-based drug design and parallel chemistry to identify selective, brain penetrant, in vivo active phosphodiesterase 9A inhibitors.</title>
        <authorList>
            <person name="Claffey M.M."/>
            <person name="Helal C.J."/>
            <person name="Verhoest P.R."/>
            <person name="Kang Z."/>
            <person name="Fors K.S."/>
            <person name="Jung S."/>
            <person name="Zhong J."/>
            <person name="Bundesmann M.W."/>
            <person name="Hou X."/>
            <person name="Lui S."/>
            <person name="Kleiman R.J."/>
            <person name="Vanase-Frawley M."/>
            <person name="Schmidt A.W."/>
            <person name="Menniti F."/>
            <person name="Schmidt C.J."/>
            <person name="Hoffman W.E."/>
            <person name="Hajos M."/>
            <person name="McDowell L."/>
            <person name="O'Connor R.E."/>
            <person name="Macdougall-Murphy M."/>
            <person name="Fonseca K.R."/>
            <person name="Becker S.L."/>
            <person name="Nelson F.R."/>
            <person name="Liras S."/>
        </authorList>
    </citation>
    <scope>X-RAY CRYSTALLOGRAPHY (2.40 ANGSTROMS) OF 242-566 IN COMPLEX WITH MAGNESIUM; ZINC AND INHIBITOR</scope>
    <scope>COFACTOR</scope>
    <scope>ACTIVITY REGULATION</scope>
</reference>
<sequence>MGSGSSSYRPKAIYLDIDGRIQKVIFSKYCNSSDIMDLFCIATGLPRNTTISLLTTDDAMVSIDPTMPANSERTPYKVRPVAIKQLSAGVEDKRTTSRGQSAERPLRDRRVVGLEQPRREGAFESGQVEPRPREPQGCYQEGQRIPPEREELIQSVLAQVAEQFSRAFKINELKAEVANHLAVLEKRVELEGLKVVEIEKCKSDIKKMREELAARSSRTNCPCKYSFLDNHKKLTPRRDVPTYPKYLLSPETIEALRKPTFDVWLWEPNEMLSCLEHMYHDLGLVRDFSINPVTLRRWLFCVHDNYRNNPFHNFRHCFCVAQMMYSMVWLCSLQEKFSQTDILILMTAAICHDLDHPGYNNTYQINARTELAVRYNDISPLENHHCAVAFQILAEPECNIFSNIPPDGFKQIRQGMITLILATDMARHAEIMDSFKEKMENFDYSNEEHMTLLKMILIKCCDISNEVRPMEVAEPWVDCLLEEYFMQSDREKSEGLPVAPFMDRDKVTKATAQIGFIKFVLIPMFETVTKLFPMVEEIMLQPLWESRDRYEELKRIDDAMKELQKKTDSLTSGATEKSRERSRDVKNSEGDCA</sequence>
<name>PDE9A_HUMAN</name>
<gene>
    <name evidence="29" type="primary">PDE9A</name>
</gene>
<proteinExistence type="evidence at protein level"/>
<feature type="chain" id="PRO_0000198841" description="High affinity cGMP-specific 3',5'-cyclic phosphodiesterase 9A">
    <location>
        <begin position="1"/>
        <end position="593"/>
    </location>
</feature>
<feature type="domain" description="PDEase" evidence="2">
    <location>
        <begin position="236"/>
        <end position="557"/>
    </location>
</feature>
<feature type="region of interest" description="Disordered" evidence="3">
    <location>
        <begin position="87"/>
        <end position="141"/>
    </location>
</feature>
<feature type="region of interest" description="Disordered" evidence="3">
    <location>
        <begin position="564"/>
        <end position="593"/>
    </location>
</feature>
<feature type="compositionally biased region" description="Basic and acidic residues" evidence="3">
    <location>
        <begin position="104"/>
        <end position="122"/>
    </location>
</feature>
<feature type="compositionally biased region" description="Basic and acidic residues" evidence="3">
    <location>
        <begin position="576"/>
        <end position="593"/>
    </location>
</feature>
<feature type="active site" description="Proton donor" evidence="8">
    <location>
        <position position="312"/>
    </location>
</feature>
<feature type="binding site" evidence="8">
    <location>
        <begin position="312"/>
        <end position="316"/>
    </location>
    <ligand>
        <name>3',5'-cyclic GMP</name>
        <dbReference type="ChEBI" id="CHEBI:57746"/>
    </ligand>
</feature>
<feature type="binding site" evidence="8 9 10 11 13 14 30 31 32 33 34 35 36 37 40 41 42 43">
    <location>
        <position position="316"/>
    </location>
    <ligand>
        <name>Zn(2+)</name>
        <dbReference type="ChEBI" id="CHEBI:29105"/>
    </ligand>
</feature>
<feature type="binding site" evidence="8 9 10 11 13 14 30 31 32 33 34 35 36 37 40 41 42 43">
    <location>
        <position position="352"/>
    </location>
    <ligand>
        <name>Zn(2+)</name>
        <dbReference type="ChEBI" id="CHEBI:29105"/>
    </ligand>
</feature>
<feature type="binding site" evidence="8">
    <location>
        <position position="353"/>
    </location>
    <ligand>
        <name>3',5'-cyclic GMP</name>
        <dbReference type="ChEBI" id="CHEBI:57746"/>
    </ligand>
</feature>
<feature type="binding site" evidence="8 9 10 11 13 14 30 31 32 33 34 35 36 37 40 41 42 43">
    <location>
        <position position="353"/>
    </location>
    <ligand>
        <name>Mg(2+)</name>
        <dbReference type="ChEBI" id="CHEBI:18420"/>
    </ligand>
</feature>
<feature type="binding site" evidence="8 9 10 11 13 14 30 31 32 33 34 35 36 37 40 41 42 43">
    <location>
        <position position="353"/>
    </location>
    <ligand>
        <name>Zn(2+)</name>
        <dbReference type="ChEBI" id="CHEBI:29105"/>
    </ligand>
</feature>
<feature type="binding site" evidence="8">
    <location>
        <position position="462"/>
    </location>
    <ligand>
        <name>3',5'-cyclic GMP</name>
        <dbReference type="ChEBI" id="CHEBI:57746"/>
    </ligand>
</feature>
<feature type="binding site" evidence="8 9 10 11 13 14 30 31 32 33 34 35 36 37 40 41 42 43">
    <location>
        <position position="462"/>
    </location>
    <ligand>
        <name>Zn(2+)</name>
        <dbReference type="ChEBI" id="CHEBI:29105"/>
    </ligand>
</feature>
<feature type="binding site" evidence="8">
    <location>
        <position position="484"/>
    </location>
    <ligand>
        <name>3',5'-cyclic GMP</name>
        <dbReference type="ChEBI" id="CHEBI:57746"/>
    </ligand>
</feature>
<feature type="binding site" evidence="8">
    <location>
        <begin position="512"/>
        <end position="513"/>
    </location>
    <ligand>
        <name>3',5'-cyclic GMP</name>
        <dbReference type="ChEBI" id="CHEBI:57746"/>
    </ligand>
</feature>
<feature type="modified residue" description="Phosphoserine" evidence="1">
    <location>
        <position position="379"/>
    </location>
</feature>
<feature type="splice variant" id="VSP_017302" description="In isoform PDE9A11." evidence="17">
    <location>
        <begin position="1"/>
        <end position="217"/>
    </location>
</feature>
<feature type="splice variant" id="VSP_017303" description="In isoform PDE9A7." evidence="17">
    <location>
        <begin position="1"/>
        <end position="207"/>
    </location>
</feature>
<feature type="splice variant" id="VSP_017304" description="In isoform PDE9A10." evidence="17">
    <location>
        <begin position="1"/>
        <end position="160"/>
    </location>
</feature>
<feature type="splice variant" id="VSP_038647" description="In isoform PDE9A21." evidence="21">
    <original>MGSGSSSYRPKAIYLDIDGRIQKVIFSKYCNSSDIMDLFCIATGLPRNTTISLLTTDDAMVSIDPTMPANSER</original>
    <variation>MSSFSIHHSVTCCFYLVRSHGRPTS</variation>
    <location>
        <begin position="1"/>
        <end position="73"/>
    </location>
</feature>
<feature type="splice variant" id="VSP_004598" description="In isoform PDE9A3 and isoform PDE9A16." evidence="17 19 23">
    <original>MGSGSSSYRPKAIYLDIDGRIQKVIFSKYCNSSDIMDLFCIATGLPRNTTISLLTTDDAMVSIDPTMPANSER</original>
    <variation>MDAFRS</variation>
    <location>
        <begin position="1"/>
        <end position="73"/>
    </location>
</feature>
<feature type="splice variant" id="VSP_017305" description="In isoform PDE9A6, isoform PDE9A12 and isoform PDE9A17." evidence="17 18">
    <original>MGSGSSSYRPKAIYLDIDGRIQKVIFSKYCNSSDIMDLFCIATGLP</original>
    <variation>MDAFR</variation>
    <location>
        <begin position="1"/>
        <end position="46"/>
    </location>
</feature>
<feature type="splice variant" id="VSP_017306" description="In isoform PDE9A13." evidence="17">
    <original>VIFSKYCNSSDIMDLFCIATGLPRNTTISLLTTDDAMVSIDPTMPANSERTPYKVRPVAIKQLSAGVEDKRTTSRGQSAERPLRDRRVVGLEQPRREGAFESGQVEPRPREPQGCYQEGQRIPPEREELIQSVLAQVAEQFS</original>
    <variation>EHDHLPADHRRRHGLHRPHHAREFRTHSVQSETCGHQATL</variation>
    <location>
        <begin position="24"/>
        <end position="165"/>
    </location>
</feature>
<feature type="splice variant" id="VSP_004600" description="In isoform PDE9A4." evidence="23">
    <original>VIFSKYCNSSDIMDLFCIATGLPRNTTISLLTTDDAMVSIDPTMPANSERTPYKVRPVAIKQLSAGVEDKRTTSRGQSAERPLRDRRVVGLEQPRREGAFESGQVEPRPREPQGCYQEGQRIPPEREELIQSVLAQVAEQFS</original>
    <variation>HSVQSETCGHQATL</variation>
    <location>
        <begin position="24"/>
        <end position="165"/>
    </location>
</feature>
<feature type="splice variant" id="VSP_017307" description="In isoform PDE9A9 and isoform PDE9A18." evidence="17">
    <location>
        <begin position="48"/>
        <end position="73"/>
    </location>
</feature>
<feature type="splice variant" id="VSP_017308" description="In isoform PDE9A12." evidence="17">
    <location>
        <begin position="73"/>
        <end position="165"/>
    </location>
</feature>
<feature type="splice variant" id="VSP_017309" description="In isoform PDE9A5." evidence="17">
    <original>TPYKVRPVAIKQLSAGVEDKRTTSRGQSAERPLRDRRVVGLEQPRREGAFESGQVEPRPREPQGCYQEGQRIPPEREELIQSVLAQVAEQFS</original>
    <variation>NELILYTSLRNLLFLPSKESWASHQHSVQSETCGHQATL</variation>
    <location>
        <begin position="74"/>
        <end position="165"/>
    </location>
</feature>
<feature type="splice variant" id="VSP_004599" description="In isoform PDE9A2, isoform PDE9A3, isoform PDE9A6, isoform PDE9A9 and isoform PDE9A21." evidence="17 18 19 20 21 23 24">
    <location>
        <begin position="88"/>
        <end position="147"/>
    </location>
</feature>
<feature type="splice variant" id="VSP_017310" description="In isoform PDE9A10." evidence="17">
    <original>AEQFS</original>
    <variation>MDAFR</variation>
    <location>
        <begin position="161"/>
        <end position="165"/>
    </location>
</feature>
<feature type="splice variant" id="VSP_017311" description="In isoform PDE9A11." evidence="17">
    <original>R</original>
    <variation>M</variation>
    <location>
        <position position="218"/>
    </location>
</feature>
<feature type="mutagenesis site" description="Completely abolishes catalytic activity." evidence="8">
    <original>H</original>
    <variation>A</variation>
    <location>
        <position position="312"/>
    </location>
</feature>
<feature type="mutagenesis site" description="Reduces catalytic activity, but has no effect on substrate affinity." evidence="8">
    <original>H</original>
    <variation>A</variation>
    <location>
        <position position="356"/>
    </location>
</feature>
<feature type="mutagenesis site" description="Induces a 2 fold change in inhibitory sensitivity by BAY-73-9961." evidence="10">
    <original>M</original>
    <variation>A</variation>
    <location>
        <position position="425"/>
    </location>
</feature>
<feature type="mutagenesis site" description="Induces a 6-9 fold change in inhibitory sensitivity by BAY-73-9961." evidence="10">
    <original>I</original>
    <variation>A</variation>
    <location>
        <position position="463"/>
    </location>
</feature>
<feature type="mutagenesis site" description="Decreased affinity and catalytic activity for cGMP and cAMP." evidence="11">
    <original>E</original>
    <variation>A</variation>
    <location>
        <position position="466"/>
    </location>
</feature>
<feature type="mutagenesis site" description="Induces a 6-9 fold change in inhibitory sensitivity by BAY-73-9961." evidence="10">
    <original>L</original>
    <variation>A</variation>
    <location>
        <position position="480"/>
    </location>
</feature>
<feature type="mutagenesis site" description="Induces a 6-9 fold change in inhibitory sensitivity by BAY-73-9961." evidence="10">
    <original>Y</original>
    <variation>A</variation>
    <location>
        <position position="484"/>
    </location>
</feature>
<feature type="mutagenesis site" description="Induces a 2 fold change in inhibitory sensitivity by BAY-73-9961." evidence="10">
    <original>F</original>
    <variation>A</variation>
    <location>
        <position position="501"/>
    </location>
</feature>
<feature type="mutagenesis site" description="Induces a dramatic change in inhibitory sensitivity by BAY-73-9961." evidence="10">
    <original>Q</original>
    <variation>A</variation>
    <location>
        <position position="513"/>
    </location>
</feature>
<feature type="mutagenesis site" description="2 fold decreased affinity and catalytic activity for cGMP. 8 fold decreased catalytic activity for cAMP without affecting the affinity for cAMP." evidence="11">
    <original>Q</original>
    <variation>E</variation>
    <location>
        <position position="513"/>
    </location>
</feature>
<feature type="mutagenesis site" description="Induces a dramatic change in inhibitory sensitivity by BAY-73-9961." evidence="10">
    <original>F</original>
    <variation>A</variation>
    <location>
        <position position="516"/>
    </location>
</feature>
<feature type="sequence conflict" description="In Ref. 6; BAG57446." evidence="25" ref="6">
    <original>R</original>
    <variation>G</variation>
    <location>
        <position position="79"/>
    </location>
</feature>
<feature type="helix" evidence="46">
    <location>
        <begin position="250"/>
        <end position="255"/>
    </location>
</feature>
<feature type="helix" evidence="45">
    <location>
        <begin position="263"/>
        <end position="265"/>
    </location>
</feature>
<feature type="helix" evidence="46">
    <location>
        <begin position="268"/>
        <end position="281"/>
    </location>
</feature>
<feature type="helix" evidence="46">
    <location>
        <begin position="284"/>
        <end position="287"/>
    </location>
</feature>
<feature type="helix" evidence="46">
    <location>
        <begin position="292"/>
        <end position="304"/>
    </location>
</feature>
<feature type="strand" evidence="46">
    <location>
        <begin position="310"/>
        <end position="313"/>
    </location>
</feature>
<feature type="helix" evidence="46">
    <location>
        <begin position="314"/>
        <end position="330"/>
    </location>
</feature>
<feature type="helix" evidence="46">
    <location>
        <begin position="333"/>
        <end position="335"/>
    </location>
</feature>
<feature type="helix" evidence="46">
    <location>
        <begin position="339"/>
        <end position="351"/>
    </location>
</feature>
<feature type="turn" evidence="46">
    <location>
        <begin position="352"/>
        <end position="355"/>
    </location>
</feature>
<feature type="helix" evidence="46">
    <location>
        <begin position="361"/>
        <end position="366"/>
    </location>
</feature>
<feature type="helix" evidence="46">
    <location>
        <begin position="370"/>
        <end position="374"/>
    </location>
</feature>
<feature type="turn" evidence="46">
    <location>
        <begin position="375"/>
        <end position="377"/>
    </location>
</feature>
<feature type="helix" evidence="46">
    <location>
        <begin position="380"/>
        <end position="393"/>
    </location>
</feature>
<feature type="helix" evidence="46">
    <location>
        <begin position="396"/>
        <end position="398"/>
    </location>
</feature>
<feature type="turn" evidence="46">
    <location>
        <begin position="400"/>
        <end position="403"/>
    </location>
</feature>
<feature type="helix" evidence="46">
    <location>
        <begin position="406"/>
        <end position="421"/>
    </location>
</feature>
<feature type="helix" evidence="46">
    <location>
        <begin position="425"/>
        <end position="427"/>
    </location>
</feature>
<feature type="helix" evidence="46">
    <location>
        <begin position="428"/>
        <end position="438"/>
    </location>
</feature>
<feature type="helix" evidence="44">
    <location>
        <begin position="439"/>
        <end position="441"/>
    </location>
</feature>
<feature type="helix" evidence="46">
    <location>
        <begin position="447"/>
        <end position="462"/>
    </location>
</feature>
<feature type="helix" evidence="46">
    <location>
        <begin position="465"/>
        <end position="467"/>
    </location>
</feature>
<feature type="helix" evidence="46">
    <location>
        <begin position="470"/>
        <end position="492"/>
    </location>
</feature>
<feature type="turn" evidence="46">
    <location>
        <begin position="493"/>
        <end position="495"/>
    </location>
</feature>
<feature type="helix" evidence="46">
    <location>
        <begin position="500"/>
        <end position="502"/>
    </location>
</feature>
<feature type="turn" evidence="46">
    <location>
        <begin position="504"/>
        <end position="506"/>
    </location>
</feature>
<feature type="helix" evidence="46">
    <location>
        <begin position="509"/>
        <end position="519"/>
    </location>
</feature>
<feature type="helix" evidence="46">
    <location>
        <begin position="521"/>
        <end position="531"/>
    </location>
</feature>
<feature type="helix" evidence="46">
    <location>
        <begin position="535"/>
        <end position="538"/>
    </location>
</feature>
<feature type="helix" evidence="46">
    <location>
        <begin position="540"/>
        <end position="562"/>
    </location>
</feature>
<protein>
    <recommendedName>
        <fullName evidence="25">High affinity cGMP-specific 3',5'-cyclic phosphodiesterase 9A</fullName>
        <ecNumber evidence="8 11 16">3.1.4.35</ecNumber>
    </recommendedName>
</protein>
<keyword id="KW-0002">3D-structure</keyword>
<keyword id="KW-0025">Alternative splicing</keyword>
<keyword id="KW-1003">Cell membrane</keyword>
<keyword id="KW-0966">Cell projection</keyword>
<keyword id="KW-0140">cGMP</keyword>
<keyword id="KW-0963">Cytoplasm</keyword>
<keyword id="KW-0256">Endoplasmic reticulum</keyword>
<keyword id="KW-0333">Golgi apparatus</keyword>
<keyword id="KW-0378">Hydrolase</keyword>
<keyword id="KW-0460">Magnesium</keyword>
<keyword id="KW-0472">Membrane</keyword>
<keyword id="KW-0479">Metal-binding</keyword>
<keyword id="KW-0597">Phosphoprotein</keyword>
<keyword id="KW-1267">Proteomics identification</keyword>
<keyword id="KW-1185">Reference proteome</keyword>
<keyword id="KW-0862">Zinc</keyword>